<keyword id="KW-0002">3D-structure</keyword>
<keyword id="KW-0007">Acetylation</keyword>
<keyword id="KW-1072">Activation of host autophagy by virus</keyword>
<keyword id="KW-0053">Apoptosis</keyword>
<keyword id="KW-0067">ATP-binding</keyword>
<keyword id="KW-0167">Capsid protein</keyword>
<keyword id="KW-1165">Clathrin-mediated endocytosis of virus by host</keyword>
<keyword id="KW-0903">Direct protein sequencing</keyword>
<keyword id="KW-1015">Disulfide bond</keyword>
<keyword id="KW-1170">Fusion of virus membrane with host endosomal membrane</keyword>
<keyword id="KW-1168">Fusion of virus membrane with host membrane</keyword>
<keyword id="KW-1078">G1/S host cell cycle checkpoint dysregulation by virus</keyword>
<keyword id="KW-0325">Glycoprotein</keyword>
<keyword id="KW-0347">Helicase</keyword>
<keyword id="KW-1032">Host cell membrane</keyword>
<keyword id="KW-1035">Host cytoplasm</keyword>
<keyword id="KW-1038">Host endoplasmic reticulum</keyword>
<keyword id="KW-1041">Host lipid droplet</keyword>
<keyword id="KW-1043">Host membrane</keyword>
<keyword id="KW-1045">Host mitochondrion</keyword>
<keyword id="KW-1048">Host nucleus</keyword>
<keyword id="KW-0945">Host-virus interaction</keyword>
<keyword id="KW-0378">Hydrolase</keyword>
<keyword id="KW-1090">Inhibition of host innate immune response by virus</keyword>
<keyword id="KW-1114">Inhibition of host interferon signaling pathway by virus</keyword>
<keyword id="KW-1097">Inhibition of host MAVS by virus</keyword>
<keyword id="KW-1113">Inhibition of host RLR pathway by virus</keyword>
<keyword id="KW-1105">Inhibition of host STAT1 by virus</keyword>
<keyword id="KW-1110">Inhibition of host TRAFs by virus</keyword>
<keyword id="KW-0922">Interferon antiviral system evasion</keyword>
<keyword id="KW-0407">Ion channel</keyword>
<keyword id="KW-0406">Ion transport</keyword>
<keyword id="KW-0449">Lipoprotein</keyword>
<keyword id="KW-0460">Magnesium</keyword>
<keyword id="KW-0472">Membrane</keyword>
<keyword id="KW-0479">Metal-binding</keyword>
<keyword id="KW-1121">Modulation of host cell cycle by virus</keyword>
<keyword id="KW-0511">Multifunctional enzyme</keyword>
<keyword id="KW-0547">Nucleotide-binding</keyword>
<keyword id="KW-0548">Nucleotidyltransferase</keyword>
<keyword id="KW-0553">Oncogene</keyword>
<keyword id="KW-0564">Palmitate</keyword>
<keyword id="KW-0597">Phosphoprotein</keyword>
<keyword id="KW-0645">Protease</keyword>
<keyword id="KW-0687">Ribonucleoprotein</keyword>
<keyword id="KW-0688">Ribosomal frameshifting</keyword>
<keyword id="KW-0694">RNA-binding</keyword>
<keyword id="KW-0696">RNA-directed RNA polymerase</keyword>
<keyword id="KW-0720">Serine protease</keyword>
<keyword id="KW-0729">SH3-binding</keyword>
<keyword id="KW-0788">Thiol protease</keyword>
<keyword id="KW-0804">Transcription</keyword>
<keyword id="KW-0805">Transcription regulation</keyword>
<keyword id="KW-0808">Transferase</keyword>
<keyword id="KW-0812">Transmembrane</keyword>
<keyword id="KW-1133">Transmembrane helix</keyword>
<keyword id="KW-0813">Transport</keyword>
<keyword id="KW-0832">Ubl conjugation</keyword>
<keyword id="KW-1161">Viral attachment to host cell</keyword>
<keyword id="KW-0261">Viral envelope protein</keyword>
<keyword id="KW-0899">Viral immunoevasion</keyword>
<keyword id="KW-1182">Viral ion channel</keyword>
<keyword id="KW-0543">Viral nucleoprotein</keyword>
<keyword id="KW-1162">Viral penetration into host cytoplasm</keyword>
<keyword id="KW-0693">Viral RNA replication</keyword>
<keyword id="KW-0946">Virion</keyword>
<keyword id="KW-1164">Virus endocytosis by host</keyword>
<keyword id="KW-1160">Virus entry into host cell</keyword>
<keyword id="KW-0862">Zinc</keyword>
<sequence length="3011" mass="327202">MSTNPKPQKKNKRNTNRRPQDVKFPGGGQIVGGVYLLPRRGPRLGVRATRKTSERSQPRGRRQPIPKARRPEGRTWAQPGYPWPLYGNEGCGWAGWLLSPRGSRPSWGPTDPRRRSRNLGKVIDTLTCGFADLMGYIPLVGAPLGGAARALAHGVRVLEDGVNYATGNLPGCSFSIFLLALLSCLTVPASAYQVRNSTGLYHVTNDCPNSSIVYEAADAILHTPGCVPCVREGNASRCWVAMTPTVATRDGKLPATQLRRHIDLLVGSATLCSALYVGDLCGSVFLVGQLFTFSPRRHWTTQGCNCSIYPGHITGHRMAWDMMMNWSPTTALVMAQLLRIPQAILDMIAGAHWGVLAGIAYFSMVGNWAKVLVVLLLFAGVDAETHVTGGSAGHTVSGFVSLLAPGAKQNVQLINTNGSWHLNSTALNCNDSLNTGWLAGLFYHHKFNSSGCPERLASCRPLTDFDQGWGPISYANGSGPDQRPYCWHYPPKPCGIVPAKSVCGPVYCFTPSPVVVGTTDRSGAPTYSWGENDTDVFVLNNTRPPLGNWFGCTWMNSTGFTKVCGAPPCVIGGAGNNTLHCPTDCFRKHPDATYSRCGSGPWITPRCLVDYPYRLWHYPCTINYTIFKIRMYVGGVEHRLEAACNWTRGERCDLEDRDRSELSPLLLTTTQWQVLPCSFTTLPALSTGLIHLHQNIVDVQYLYGVGSSIASWAIKWEYVVLLFLLLADARVCSCLWMMLLISQAEAALENLVILNAASLAGTHGLVSFLVFFCFAWYLKGKWVPGAVYTFYGMWPLLLLLLALPQRAYALDTEVAASCGGVVLVGLMALTLSPYYKRYISWCLWWLQYFLTRVEAQLHVWIPPLNVRGGRDAVILLMCAVHPTLVFDITKLLLAVFGPLWILQASLLKVPYFVRVQGLLRFCALARKMIGGHYVQMVIIKLGALTGTYVYNHLTPLRDWAHNGLRDLAVAVEPVVFSQMETKLITWGADTAACGDIINGLPVSARRGREILLGPADGMVSKGWRLLAPITAYAQQTRGLLGCIITSLTGRDKNQVEGEVQIVSTAAQTFLATCINGVCWTVYHGAGTRTIASPKGPVIQMYTNVDQDLVGWPAPQGSRSLTPCTCGSSDLYLVTRHADVIPVRRRGDSRGSLLSPRPISYLKGSSGGPLLCPAGHAVGIFRAAVCTRGVAKAVDFIPVENLETTMRSPVFTDNSSPPVVPQSFQVAHLHAPTGSGKSTKVPAAYAAQGYKVLVLNPSVAATLGFGAYMSKAHGIDPNIRTGVRTITTGSPITYSTYGKFLADGGCSGGAYDIIICDECHSTDATSILGIGTVLDQAETAGARLVVLATATPPGSVTVPHPNIEEVALSTTGEIPFYGKAIPLEVIKGGRHLIFCHSKKKCDELAAKLVALGINAVAYYRGLDVSVIPTSGDVVVVATDALMTGYTGDFDSVIDCNTCVTQTVDFSLDPTFTIETITLPQDAVSRTQRRGRTGRGKPGIYRFVAPGERPSGMFDSSVLCECYDAGCAWYELTPAETTVRLRAYMNTPGLPVCQDHLEFWEGVFTGLTHIDAHFLSQTKQSGENLPYLVAYQATVCARAQAPPPSWDQMWKCLIRLKPTLHGPTPLLYRLGAVQNEITLTHPVTKYIMTCMSADLEVVTSTWVLVGGVLAALAAYCLSTGCVVIVGRVVLSGKPAIIPDREVLYREFDEMEECSQHLPYIEQGMMLAEQFKQKALGLLQTASRQAEVIAPAVQTNWQKLETFWAKHMWNFISGIQYLAGLSTLPGNPAIASLMAFTAAVTSPLTTSQTLLFNILGGWVAAQLAAPGAATAFVGAGLAGAAIGSVGLGKVLIDILAGYGAGVAGALVAFKIMSGEVPSTEDLVNLLPAILSPGALVVGVVCAAILRRHVGPGEGAVQWMNRLIAFASRGNHVSPTHYVPESDAAARVTAILSSLTVTQLLRRLHQWISSECTTPCSGSWLRDIWDWICEVLSDFKTWLKAKLMPQLPGIPFVSCQRGYKGVWRVDGIMHTRCHCGAEITGHVKNGTMRIVGPRTCRNMWSGTFPINAYTTGPCTPLPAPNYTFALWRVSAEEYVEIRQVGDFHYVTGMTTDNLKCPCQVPSPEFFTELDGVRLHRFAPPCKPLLREEVSFRVGLHEYPVGSQLPCEPEPDVAVLTSMLTDPSHITAEAAGRRLARGSPPSVASSSASQLSAPSLKATCTANHDSPDAELIEANLLWRQEMGGNITRVESENKVVILDSFDPLVAEEDEREISVPAEILRKSRRFAQALPVWARPDYNPPLVETWKKPDYEPPVVHGCPLPPPKSPPVPPPRKKRTVVLTESTLSTALAELATRSFGSSSTSGITGDNTTTSSEPAPSGCPPDSDAESYSSMPPLEGEPGDPDLSDGSWSTVSSEANAEDVVCCSMSYSWTGALVTPCAAEEQKLPINALSNSLLRHHNLVYSTTSRSACQRQKKVTFDRLQVLDSHYQDVLKEVKAAASKVKANLLSVEEACSLTPPHSAKSKFGYGAKDVRCHARKAVTHINSVWKDLLEDNVTPIDTTIMAKNEVFCVQPEKGGRKPARLIVFPDLGVRVCEKMALYDVVTKLPLAVMGSSYGFQYSPGQRVEFLVQAWKSKKTPMGFSYDTRCFDSTVTESDIRTEEAIYQCCDLDPQARVAIKSLTERLYVGGPLTNSRGENCGYRRCRASGVLTTSCGNTLTCYIKARAACRAAGLQDCTMLVCGDDLVVICESAGVQEDAASLRAFTEAMTRYSAPPGDPPQPEYDLELITSCSSNVSVAHDGAGKRVYYLTRDPTTPLARAAWETARHTPVNSWLGNIIMFAPTLWARMILMTHFFSVLIARDQLEQALDCEIYGACYSIEPLDLPPIIQRLHGLSAFSLHSYSPGEINRVAACLRKLGVPPLRAWRHRARSVRARLLARGGRAAICGKYLFNWAVRTKLKLTPIAAAGQLDLSGWFTAGYSGGDIYHSVSHARPRWIWFCLLLLAAGVGIYLLPNR</sequence>
<reference key="1">
    <citation type="journal article" date="1991" name="Proc. Natl. Acad. Sci. U.S.A.">
        <title>Genetic organization and diversity of the hepatitis C virus.</title>
        <authorList>
            <person name="Choo Q.-L."/>
            <person name="Richman K.H."/>
            <person name="Han J.H."/>
            <person name="Berger K."/>
            <person name="Lee C."/>
            <person name="Dong C."/>
            <person name="Gallegos C."/>
            <person name="Coit D."/>
            <person name="Medina-Selby A."/>
            <person name="Barr P.J."/>
            <person name="Weiner A.J."/>
            <person name="Bradley D.W."/>
            <person name="Kuo G."/>
            <person name="Houghton M."/>
        </authorList>
    </citation>
    <scope>NUCLEOTIDE SEQUENCE [GENOMIC RNA]</scope>
</reference>
<reference key="2">
    <citation type="journal article" date="2001" name="J. Gen. Virol.">
        <title>Infectious cDNA clone of the hepatitis C virus genotype 1 prototype sequence.</title>
        <authorList>
            <person name="Lanford R.E."/>
            <person name="Lee H."/>
            <person name="Chavez D."/>
            <person name="Guerra B."/>
            <person name="Brasky K.M."/>
        </authorList>
    </citation>
    <scope>NUCLEOTIDE SEQUENCE [GENOMIC RNA]</scope>
    <source>
        <strain>Infectious clone pHCV-1/SF</strain>
    </source>
</reference>
<reference key="3">
    <citation type="journal article" date="1995" name="Virology">
        <title>Differential subcellular localization of hepatitis C virus core gene products.</title>
        <authorList>
            <person name="Lo S.-Y."/>
            <person name="Masiarz F."/>
            <person name="Hwang S.B."/>
            <person name="Lai M.M.C."/>
            <person name="Ou J.-H."/>
        </authorList>
    </citation>
    <scope>PROTEIN SEQUENCE OF 2-16</scope>
    <scope>SUBCELLULAR LOCATION (MATURE CORE PROTEIN)</scope>
    <scope>PROTEOLYTIC CLEAVAGE (GENOME POLYPROTEIN)</scope>
</reference>
<reference key="4">
    <citation type="journal article" date="1995" name="Virus Res.">
        <title>Transcriptional regulation of cellular and viral promoters by the hepatitis C virus core protein.</title>
        <authorList>
            <person name="Ray R.B."/>
            <person name="Lagging L.M."/>
            <person name="Meyer K."/>
            <person name="Steele R."/>
            <person name="Ray R."/>
        </authorList>
    </citation>
    <scope>FUNCTION (MATURE CORE PROTEIN)</scope>
</reference>
<reference key="5">
    <citation type="journal article" date="1996" name="J. Virol.">
        <title>Interaction between hepatitis C virus core protein and E1 envelope protein.</title>
        <authorList>
            <person name="Lo S.-Y."/>
            <person name="Selby M.J."/>
            <person name="Ou J.-H."/>
        </authorList>
    </citation>
    <scope>INTERACTION WITH ENVELOPE GLYCOPROTEIN E1 (MATURE CORE PROTEIN)</scope>
    <scope>INTERACTION WITH MATURE CORE PROTEIN (ENVELOPE GLYCOPROTEIN E1)</scope>
</reference>
<reference key="6">
    <citation type="journal article" date="1996" name="Virology">
        <title>Suppression of apoptotic cell death by hepatitis C virus core protein.</title>
        <authorList>
            <person name="Ray R.B."/>
            <person name="Meyer K."/>
            <person name="Ray R."/>
        </authorList>
    </citation>
    <scope>FUNCTION (MATURE CORE PROTEIN)</scope>
</reference>
<reference key="7">
    <citation type="journal article" date="1997" name="J. Biol. Chem.">
        <title>Transcriptional repression of p53 promoter by hepatitis C virus core protein.</title>
        <authorList>
            <person name="Ray R.B."/>
            <person name="Steele R."/>
            <person name="Meyer K."/>
            <person name="Ray R."/>
        </authorList>
    </citation>
    <scope>FUNCTION (MATURE CORE PROTEIN)</scope>
</reference>
<reference key="8">
    <citation type="journal article" date="1997" name="Virology">
        <title>Evidence that hepatitis C virus resistance to interferon is mediated through repression of the PKR protein kinase by the nonstructural 5A protein.</title>
        <authorList>
            <person name="Gale M.J. Jr."/>
            <person name="Korth M.J."/>
            <person name="Tang N.M."/>
            <person name="Tan S.-L."/>
            <person name="Hopkins D.A."/>
            <person name="Dever T.E."/>
            <person name="Polyak S.J."/>
            <person name="Gretch D.R."/>
            <person name="Katze M.G."/>
        </authorList>
    </citation>
    <scope>INTERACTION WITH HOST EIF2AK2/PKR (NON-STRUCTURAL PROTEIN 5A)</scope>
    <scope>FUNCTION (NON-STRUCTURAL PROTEIN 5A)</scope>
</reference>
<reference key="9">
    <citation type="journal article" date="1998" name="Gene">
        <title>Hepatitis C virus core protein represses p21WAF1/Cip1/Sid1 promoter activity.</title>
        <authorList>
            <person name="Ray R.B."/>
            <person name="Steele R."/>
            <person name="Meyer K."/>
            <person name="Ray R."/>
        </authorList>
    </citation>
    <scope>FUNCTION (MATURE CORE PROTEIN)</scope>
</reference>
<reference key="10">
    <citation type="journal article" date="1998" name="J. Virol.">
        <title>Ectopic expression of hepatitis C virus core protein differentially regulates nuclear transcription factors.</title>
        <authorList>
            <person name="Shrivastava A."/>
            <person name="Manna S.K."/>
            <person name="Ray R."/>
            <person name="Aggarwal B.B."/>
        </authorList>
    </citation>
    <scope>FUNCTION (MATURE CORE PROTEIN)</scope>
</reference>
<reference key="11">
    <citation type="journal article" date="1999" name="Science">
        <title>Inhibition of the interferon-inducible protein kinase PKR by HCV E2 protein.</title>
        <authorList>
            <person name="Taylor D.R."/>
            <person name="Shi S.T."/>
            <person name="Romano P.R."/>
            <person name="Barber G.N."/>
            <person name="Lai M.M.C."/>
        </authorList>
    </citation>
    <scope>INTERACTION WITH HOST EIF2AK2/PKR (ENVELOPE GLYCOPROTEIN E2)</scope>
    <scope>FUNCTION (ENVELOPE GLYCOPROTEIN E2)</scope>
</reference>
<reference key="12">
    <citation type="journal article" date="2001" name="J. Virol.">
        <title>Hepatitis C virus envelope protein E2 does not inhibit PKR by simple competition with autophosphorylation sites in the RNA-binding domain.</title>
        <authorList>
            <person name="Taylor D.R."/>
            <person name="Tian B."/>
            <person name="Romano P.R."/>
            <person name="Hinnebusch A.G."/>
            <person name="Lai M.M.C."/>
            <person name="Mathews M.B."/>
        </authorList>
    </citation>
    <scope>FUNCTION (ENVELOPE GLYCOPROTEIN E2)</scope>
</reference>
<reference key="13">
    <citation type="journal article" date="2002" name="J. Biol. Chem.">
        <title>Membrane topology of the hepatitis C virus NS2 protein.</title>
        <authorList>
            <person name="Yamaga A.K."/>
            <person name="Ou J.-H."/>
        </authorList>
    </citation>
    <scope>TOPOLOGY (PROTEASE NS2)</scope>
    <scope>SUBCELLULAR LOCATION (PROTEASE NS2)</scope>
</reference>
<reference key="14">
    <citation type="journal article" date="2004" name="J. Gen. Virol.">
        <title>The hepatitis C virus NS5A protein binds to members of the Src family of tyrosine kinases and regulates kinase activity.</title>
        <authorList>
            <person name="Macdonald A."/>
            <person name="Crowder K."/>
            <person name="Street A."/>
            <person name="McCormick C."/>
            <person name="Harris M."/>
        </authorList>
    </citation>
    <scope>INTERACTION WITH HOST SRC-FAMILY KINASES (NON-STRUCTURAL PROTEIN 5A)</scope>
    <scope>MUTAGENESIS OF 2001-PRO--PRO-2004; 2315-PRO--PRO-2318 AND 2322-PRO--PRO-2326</scope>
</reference>
<reference key="15">
    <citation type="journal article" date="2004" name="J. Virol.">
        <title>Targeting of hepatitis C virus core protein to mitochondria through a novel C-terminal localization motif.</title>
        <authorList>
            <person name="Schwer B."/>
            <person name="Ren S."/>
            <person name="Pietschmann T."/>
            <person name="Kartenbeck J."/>
            <person name="Kaehlcke K."/>
            <person name="Bartenschlager R."/>
            <person name="Yen T.S.B."/>
            <person name="Ott M."/>
        </authorList>
    </citation>
    <scope>SUBCELLULAR LOCATION (MATURE CORE PROTEIN)</scope>
</reference>
<reference key="16">
    <citation type="journal article" date="2005" name="J. Gen. Virol.">
        <title>Hepatitis C virus (HCV) NS5A protein downregulates HCV IRES-dependent translation.</title>
        <authorList>
            <person name="Kalliampakou K.I."/>
            <person name="Kalamvoki M."/>
            <person name="Mavromara P."/>
        </authorList>
    </citation>
    <scope>FUNCTION (NON-STRUCTURAL PROTEIN 5A)</scope>
</reference>
<reference key="17">
    <citation type="journal article" date="2000" name="J. Viral Hepat.">
        <title>Properties of the hepatitis C virus core protein: a structural protein that modulates cellular processes.</title>
        <authorList>
            <person name="McLauchlan J."/>
        </authorList>
    </citation>
    <scope>REVIEW</scope>
</reference>
<reference key="18">
    <citation type="journal article" date="2004" name="Hepatology">
        <title>Structural biology of hepatitis C virus.</title>
        <authorList>
            <person name="Penin F."/>
            <person name="Dubuisson J."/>
            <person name="Rey F.A."/>
            <person name="Moradpour D."/>
            <person name="Pawlotsky J.-M."/>
        </authorList>
    </citation>
    <scope>REVIEW</scope>
</reference>
<proteinExistence type="evidence at protein level"/>
<dbReference type="EC" id="3.4.22.-" evidence="4"/>
<dbReference type="EC" id="3.4.21.98" evidence="5"/>
<dbReference type="EC" id="3.6.1.15" evidence="5"/>
<dbReference type="EC" id="3.6.4.13" evidence="5"/>
<dbReference type="EC" id="2.7.7.48" evidence="5"/>
<dbReference type="EMBL" id="M62321">
    <property type="protein sequence ID" value="AAA45676.1"/>
    <property type="molecule type" value="Genomic_RNA"/>
</dbReference>
<dbReference type="EMBL" id="AF271632">
    <property type="protein sequence ID" value="AAF81759.1"/>
    <property type="molecule type" value="Genomic_RNA"/>
</dbReference>
<dbReference type="PIR" id="A39166">
    <property type="entry name" value="GNWVC3"/>
</dbReference>
<dbReference type="PDB" id="1RTL">
    <property type="method" value="X-ray"/>
    <property type="resolution" value="2.75 A"/>
    <property type="chains" value="A/B=1027-1207"/>
</dbReference>
<dbReference type="PDB" id="2A4G">
    <property type="method" value="X-ray"/>
    <property type="resolution" value="2.50 A"/>
    <property type="chains" value="A/C=1027-1207"/>
</dbReference>
<dbReference type="PDB" id="2GVF">
    <property type="method" value="X-ray"/>
    <property type="resolution" value="2.50 A"/>
    <property type="chains" value="A/C=1027-1207, B/D=1680-1696"/>
</dbReference>
<dbReference type="PDB" id="3EYD">
    <property type="method" value="X-ray"/>
    <property type="resolution" value="2.30 A"/>
    <property type="chains" value="A/C=1027-1207, B/D=1680-1696"/>
</dbReference>
<dbReference type="PDB" id="3HKW">
    <property type="method" value="X-ray"/>
    <property type="resolution" value="1.55 A"/>
    <property type="chains" value="A/B/C=2421-2990"/>
</dbReference>
<dbReference type="PDB" id="3KN2">
    <property type="method" value="X-ray"/>
    <property type="resolution" value="2.30 A"/>
    <property type="chains" value="A/C=1027-1207"/>
</dbReference>
<dbReference type="PDB" id="3QGH">
    <property type="method" value="X-ray"/>
    <property type="resolution" value="2.14 A"/>
    <property type="chains" value="A=2421-2990"/>
</dbReference>
<dbReference type="PDB" id="3QGI">
    <property type="method" value="X-ray"/>
    <property type="resolution" value="1.80 A"/>
    <property type="chains" value="A=2421-2990"/>
</dbReference>
<dbReference type="PDB" id="3RC4">
    <property type="method" value="X-ray"/>
    <property type="resolution" value="1.50 A"/>
    <property type="chains" value="A=1030-1208"/>
</dbReference>
<dbReference type="PDB" id="3RC5">
    <property type="method" value="X-ray"/>
    <property type="resolution" value="1.60 A"/>
    <property type="chains" value="A=1030-1208"/>
</dbReference>
<dbReference type="PDB" id="3SU4">
    <property type="method" value="X-ray"/>
    <property type="resolution" value="2.25 A"/>
    <property type="chains" value="A/B=1030-1208"/>
</dbReference>
<dbReference type="PDB" id="6MVO">
    <property type="method" value="X-ray"/>
    <property type="resolution" value="1.95 A"/>
    <property type="chains" value="A/B=2421-2982"/>
</dbReference>
<dbReference type="PDB" id="6N4N">
    <property type="method" value="X-ray"/>
    <property type="resolution" value="2.29 A"/>
    <property type="chains" value="A/B=1030-1208"/>
</dbReference>
<dbReference type="PDB" id="6VDO">
    <property type="method" value="X-ray"/>
    <property type="resolution" value="2.11 A"/>
    <property type="chains" value="A=1030-1208"/>
</dbReference>
<dbReference type="PDB" id="7MM3">
    <property type="method" value="X-ray"/>
    <property type="resolution" value="1.78 A"/>
    <property type="chains" value="A=1030-1207"/>
</dbReference>
<dbReference type="PDB" id="7MM4">
    <property type="method" value="X-ray"/>
    <property type="resolution" value="1.89 A"/>
    <property type="chains" value="A=1030-1207"/>
</dbReference>
<dbReference type="PDB" id="7MM9">
    <property type="method" value="X-ray"/>
    <property type="resolution" value="2.11 A"/>
    <property type="chains" value="A=1030-1207"/>
</dbReference>
<dbReference type="PDB" id="7MMA">
    <property type="method" value="X-ray"/>
    <property type="resolution" value="1.65 A"/>
    <property type="chains" value="A=1030-1207"/>
</dbReference>
<dbReference type="PDB" id="7MMB">
    <property type="method" value="X-ray"/>
    <property type="resolution" value="1.99 A"/>
    <property type="chains" value="A=1030-1207"/>
</dbReference>
<dbReference type="PDB" id="7MMC">
    <property type="method" value="X-ray"/>
    <property type="resolution" value="2.00 A"/>
    <property type="chains" value="A=1030-1207"/>
</dbReference>
<dbReference type="PDB" id="7MMD">
    <property type="method" value="X-ray"/>
    <property type="resolution" value="1.89 A"/>
    <property type="chains" value="A=1030-1207"/>
</dbReference>
<dbReference type="PDB" id="7MME">
    <property type="method" value="X-ray"/>
    <property type="resolution" value="1.56 A"/>
    <property type="chains" value="A=1030-1207"/>
</dbReference>
<dbReference type="PDB" id="7MMK">
    <property type="method" value="X-ray"/>
    <property type="resolution" value="1.89 A"/>
    <property type="chains" value="A=1030-1205"/>
</dbReference>
<dbReference type="PDB" id="7MML">
    <property type="method" value="X-ray"/>
    <property type="resolution" value="1.70 A"/>
    <property type="chains" value="A=1030-1207"/>
</dbReference>
<dbReference type="PDBsum" id="1RTL"/>
<dbReference type="PDBsum" id="2A4G"/>
<dbReference type="PDBsum" id="2GVF"/>
<dbReference type="PDBsum" id="3EYD"/>
<dbReference type="PDBsum" id="3HKW"/>
<dbReference type="PDBsum" id="3KN2"/>
<dbReference type="PDBsum" id="3QGH"/>
<dbReference type="PDBsum" id="3QGI"/>
<dbReference type="PDBsum" id="3RC4"/>
<dbReference type="PDBsum" id="3RC5"/>
<dbReference type="PDBsum" id="3SU4"/>
<dbReference type="PDBsum" id="6MVO"/>
<dbReference type="PDBsum" id="6N4N"/>
<dbReference type="PDBsum" id="6VDO"/>
<dbReference type="PDBsum" id="7MM3"/>
<dbReference type="PDBsum" id="7MM4"/>
<dbReference type="PDBsum" id="7MM9"/>
<dbReference type="PDBsum" id="7MMA"/>
<dbReference type="PDBsum" id="7MMB"/>
<dbReference type="PDBsum" id="7MMC"/>
<dbReference type="PDBsum" id="7MMD"/>
<dbReference type="PDBsum" id="7MME"/>
<dbReference type="PDBsum" id="7MMK"/>
<dbReference type="PDBsum" id="7MML"/>
<dbReference type="BMRB" id="P26664"/>
<dbReference type="SMR" id="P26664"/>
<dbReference type="IntAct" id="P26664">
    <property type="interactions" value="4"/>
</dbReference>
<dbReference type="MINT" id="P26664"/>
<dbReference type="BindingDB" id="P26664"/>
<dbReference type="ChEMBL" id="CHEMBL4620"/>
<dbReference type="DrugBank" id="DB15156">
    <property type="generic name" value="ABT-072"/>
</dbReference>
<dbReference type="DrugBank" id="DB12724">
    <property type="generic name" value="AZD-7295"/>
</dbReference>
<dbReference type="DrugBank" id="DB12283">
    <property type="generic name" value="Balapiravir"/>
</dbReference>
<dbReference type="DrugBank" id="DB12225">
    <property type="generic name" value="Beclabuvir"/>
</dbReference>
<dbReference type="DrugBank" id="DB11966">
    <property type="generic name" value="BMS-986094"/>
</dbReference>
<dbReference type="DrugBank" id="DB08873">
    <property type="generic name" value="Boceprevir"/>
</dbReference>
<dbReference type="DrugBank" id="DB05868">
    <property type="generic name" value="Ciluprevir"/>
</dbReference>
<dbReference type="DrugBank" id="DB15932">
    <property type="generic name" value="Clemizole"/>
</dbReference>
<dbReference type="DrugBank" id="DB09102">
    <property type="generic name" value="Daclatasvir"/>
</dbReference>
<dbReference type="DrugBank" id="DB11779">
    <property type="generic name" value="Danoprevir"/>
</dbReference>
<dbReference type="DrugBank" id="DB09183">
    <property type="generic name" value="Dasabuvir"/>
</dbReference>
<dbReference type="DrugBank" id="DB14850">
    <property type="generic name" value="Deleobuvir"/>
</dbReference>
<dbReference type="DrugBank" id="DB11878">
    <property type="generic name" value="Filibuvir"/>
</dbReference>
<dbReference type="DrugBank" id="DB12785">
    <property type="generic name" value="Furaprevir"/>
</dbReference>
<dbReference type="DrugBank" id="DB06499">
    <property type="generic name" value="Furaprofen"/>
</dbReference>
<dbReference type="DrugBank" id="DB15222">
    <property type="generic name" value="GS-6620"/>
</dbReference>
<dbReference type="DrugBank" id="DB05884">
    <property type="generic name" value="HCV-086"/>
</dbReference>
<dbReference type="DrugBank" id="DB13095">
    <property type="generic name" value="JTK-853"/>
</dbReference>
<dbReference type="DrugBank" id="DB09027">
    <property type="generic name" value="Ledipasvir"/>
</dbReference>
<dbReference type="DrugBank" id="DB11954">
    <property type="generic name" value="Lomibuvir"/>
</dbReference>
<dbReference type="DrugBank" id="DB12045">
    <property type="generic name" value="Mericitabine"/>
</dbReference>
<dbReference type="DrugBank" id="DB15249">
    <property type="generic name" value="MK-6325"/>
</dbReference>
<dbReference type="DrugBank" id="DB07582">
    <property type="generic name" value="N-[(2R,3S)-1-((2S)-2-{[(CYCLOPENTYLAMINO)CARBONYL]AMINO}-3-METHYLBUTANOYL)-2-(1-FORMYL-1-CYCLOBUTYL)PYRROLIDINYL]CYCLOPROPANECARBOXAMIDE"/>
</dbReference>
<dbReference type="DrugBank" id="DB07238">
    <property type="generic name" value="Nesbuvir"/>
</dbReference>
<dbReference type="DrugBank" id="DB13041">
    <property type="generic name" value="Odalasvir"/>
</dbReference>
<dbReference type="DrugBank" id="DB09296">
    <property type="generic name" value="Ombitasvir"/>
</dbReference>
<dbReference type="DrugBank" id="DB15586">
    <property type="generic name" value="Patulin"/>
</dbReference>
<dbReference type="DrugBank" id="DB15652">
    <property type="generic name" value="Ravidasvir"/>
</dbReference>
<dbReference type="DrugBank" id="DB12051">
    <property type="generic name" value="Setrobuvir"/>
</dbReference>
<dbReference type="DrugBank" id="DB06290">
    <property type="generic name" value="Simeprevir"/>
</dbReference>
<dbReference type="DrugBank" id="DB08934">
    <property type="generic name" value="Sofosbuvir"/>
</dbReference>
<dbReference type="DrugBank" id="DB11852">
    <property type="generic name" value="Tegobuvir"/>
</dbReference>
<dbReference type="DrugBank" id="DB05521">
    <property type="generic name" value="Telaprevir"/>
</dbReference>
<dbReference type="DrugBank" id="DB11822">
    <property type="generic name" value="TMC-647055"/>
</dbReference>
<dbReference type="DrugBank" id="DB15152">
    <property type="generic name" value="TMC-649128"/>
</dbReference>
<dbReference type="DrugBank" id="DB13920">
    <property type="generic name" value="Valopicitabine"/>
</dbReference>
<dbReference type="DrugBank" id="DB12037">
    <property type="generic name" value="Vedroprevir"/>
</dbReference>
<dbReference type="DrugBank" id="DB12026">
    <property type="generic name" value="Voxilaprevir"/>
</dbReference>
<dbReference type="DrugBank" id="DB06058">
    <property type="generic name" value="XTL-6865"/>
</dbReference>
<dbReference type="MEROPS" id="C18.001"/>
<dbReference type="MEROPS" id="S29.001"/>
<dbReference type="ABCD" id="P26664">
    <property type="antibodies" value="1 sequenced antibody"/>
</dbReference>
<dbReference type="euHCVdb" id="AF271632"/>
<dbReference type="euHCVdb" id="M62321"/>
<dbReference type="SABIO-RK" id="P26664"/>
<dbReference type="EvolutionaryTrace" id="P26664"/>
<dbReference type="Proteomes" id="UP000007410">
    <property type="component" value="Segment"/>
</dbReference>
<dbReference type="Proteomes" id="UP000008855">
    <property type="component" value="Segment"/>
</dbReference>
<dbReference type="GO" id="GO:0044167">
    <property type="term" value="C:host cell endoplasmic reticulum membrane"/>
    <property type="evidence" value="ECO:0007669"/>
    <property type="project" value="UniProtKB-SubCell"/>
</dbReference>
<dbReference type="GO" id="GO:0044186">
    <property type="term" value="C:host cell lipid droplet"/>
    <property type="evidence" value="ECO:0007669"/>
    <property type="project" value="UniProtKB-SubCell"/>
</dbReference>
<dbReference type="GO" id="GO:0044191">
    <property type="term" value="C:host cell mitochondrial membrane"/>
    <property type="evidence" value="ECO:0007669"/>
    <property type="project" value="UniProtKB-SubCell"/>
</dbReference>
<dbReference type="GO" id="GO:0042025">
    <property type="term" value="C:host cell nucleus"/>
    <property type="evidence" value="ECO:0007669"/>
    <property type="project" value="UniProtKB-SubCell"/>
</dbReference>
<dbReference type="GO" id="GO:0044220">
    <property type="term" value="C:host cell perinuclear region of cytoplasm"/>
    <property type="evidence" value="ECO:0007669"/>
    <property type="project" value="UniProtKB-SubCell"/>
</dbReference>
<dbReference type="GO" id="GO:0020002">
    <property type="term" value="C:host cell plasma membrane"/>
    <property type="evidence" value="ECO:0007669"/>
    <property type="project" value="UniProtKB-SubCell"/>
</dbReference>
<dbReference type="GO" id="GO:0016020">
    <property type="term" value="C:membrane"/>
    <property type="evidence" value="ECO:0007669"/>
    <property type="project" value="UniProtKB-KW"/>
</dbReference>
<dbReference type="GO" id="GO:1990904">
    <property type="term" value="C:ribonucleoprotein complex"/>
    <property type="evidence" value="ECO:0007669"/>
    <property type="project" value="UniProtKB-KW"/>
</dbReference>
<dbReference type="GO" id="GO:0019031">
    <property type="term" value="C:viral envelope"/>
    <property type="evidence" value="ECO:0007669"/>
    <property type="project" value="UniProtKB-KW"/>
</dbReference>
<dbReference type="GO" id="GO:0019013">
    <property type="term" value="C:viral nucleocapsid"/>
    <property type="evidence" value="ECO:0007669"/>
    <property type="project" value="UniProtKB-KW"/>
</dbReference>
<dbReference type="GO" id="GO:0055036">
    <property type="term" value="C:virion membrane"/>
    <property type="evidence" value="ECO:0007669"/>
    <property type="project" value="UniProtKB-SubCell"/>
</dbReference>
<dbReference type="GO" id="GO:0005524">
    <property type="term" value="F:ATP binding"/>
    <property type="evidence" value="ECO:0007669"/>
    <property type="project" value="UniProtKB-KW"/>
</dbReference>
<dbReference type="GO" id="GO:0016887">
    <property type="term" value="F:ATP hydrolysis activity"/>
    <property type="evidence" value="ECO:0007669"/>
    <property type="project" value="RHEA"/>
</dbReference>
<dbReference type="GO" id="GO:0015267">
    <property type="term" value="F:channel activity"/>
    <property type="evidence" value="ECO:0007669"/>
    <property type="project" value="UniProtKB-KW"/>
</dbReference>
<dbReference type="GO" id="GO:0004197">
    <property type="term" value="F:cysteine-type endopeptidase activity"/>
    <property type="evidence" value="ECO:0007669"/>
    <property type="project" value="InterPro"/>
</dbReference>
<dbReference type="GO" id="GO:0003723">
    <property type="term" value="F:RNA binding"/>
    <property type="evidence" value="ECO:0007669"/>
    <property type="project" value="UniProtKB-KW"/>
</dbReference>
<dbReference type="GO" id="GO:0003724">
    <property type="term" value="F:RNA helicase activity"/>
    <property type="evidence" value="ECO:0007669"/>
    <property type="project" value="UniProtKB-EC"/>
</dbReference>
<dbReference type="GO" id="GO:0003968">
    <property type="term" value="F:RNA-directed RNA polymerase activity"/>
    <property type="evidence" value="ECO:0007669"/>
    <property type="project" value="UniProtKB-KW"/>
</dbReference>
<dbReference type="GO" id="GO:0004252">
    <property type="term" value="F:serine-type endopeptidase activity"/>
    <property type="evidence" value="ECO:0007669"/>
    <property type="project" value="InterPro"/>
</dbReference>
<dbReference type="GO" id="GO:0017124">
    <property type="term" value="F:SH3 domain binding"/>
    <property type="evidence" value="ECO:0007669"/>
    <property type="project" value="UniProtKB-KW"/>
</dbReference>
<dbReference type="GO" id="GO:0005198">
    <property type="term" value="F:structural molecule activity"/>
    <property type="evidence" value="ECO:0007669"/>
    <property type="project" value="InterPro"/>
</dbReference>
<dbReference type="GO" id="GO:0008270">
    <property type="term" value="F:zinc ion binding"/>
    <property type="evidence" value="ECO:0007669"/>
    <property type="project" value="InterPro"/>
</dbReference>
<dbReference type="GO" id="GO:0075512">
    <property type="term" value="P:clathrin-dependent endocytosis of virus by host cell"/>
    <property type="evidence" value="ECO:0007669"/>
    <property type="project" value="UniProtKB-KW"/>
</dbReference>
<dbReference type="GO" id="GO:0039654">
    <property type="term" value="P:fusion of virus membrane with host endosome membrane"/>
    <property type="evidence" value="ECO:0007669"/>
    <property type="project" value="UniProtKB-KW"/>
</dbReference>
<dbReference type="GO" id="GO:0034220">
    <property type="term" value="P:monoatomic ion transmembrane transport"/>
    <property type="evidence" value="ECO:0007669"/>
    <property type="project" value="UniProtKB-KW"/>
</dbReference>
<dbReference type="GO" id="GO:0006508">
    <property type="term" value="P:proteolysis"/>
    <property type="evidence" value="ECO:0007669"/>
    <property type="project" value="UniProtKB-KW"/>
</dbReference>
<dbReference type="GO" id="GO:0039520">
    <property type="term" value="P:symbiont-mediated activation of host autophagy"/>
    <property type="evidence" value="ECO:0007669"/>
    <property type="project" value="UniProtKB-KW"/>
</dbReference>
<dbReference type="GO" id="GO:0039645">
    <property type="term" value="P:symbiont-mediated perturbation of host cell cycle G1/S transition checkpoint"/>
    <property type="evidence" value="ECO:0007669"/>
    <property type="project" value="UniProtKB-KW"/>
</dbReference>
<dbReference type="GO" id="GO:0039545">
    <property type="term" value="P:symbiont-mediated suppression of host cytoplasmic pattern recognition receptor signaling pathway via inhibition of MAVS activity"/>
    <property type="evidence" value="ECO:0007669"/>
    <property type="project" value="UniProtKB-KW"/>
</dbReference>
<dbReference type="GO" id="GO:0039563">
    <property type="term" value="P:symbiont-mediated suppression of host JAK-STAT cascade via inhibition of STAT1 activity"/>
    <property type="evidence" value="ECO:0007669"/>
    <property type="project" value="UniProtKB-KW"/>
</dbReference>
<dbReference type="GO" id="GO:0039527">
    <property type="term" value="P:symbiont-mediated suppression of host TRAF-mediated signal transduction"/>
    <property type="evidence" value="ECO:0007669"/>
    <property type="project" value="UniProtKB-KW"/>
</dbReference>
<dbReference type="GO" id="GO:0039502">
    <property type="term" value="P:symbiont-mediated suppression of host type I interferon-mediated signaling pathway"/>
    <property type="evidence" value="ECO:0007669"/>
    <property type="project" value="UniProtKB-KW"/>
</dbReference>
<dbReference type="GO" id="GO:0019087">
    <property type="term" value="P:symbiont-mediated transformation of host cell"/>
    <property type="evidence" value="ECO:0007669"/>
    <property type="project" value="InterPro"/>
</dbReference>
<dbReference type="GO" id="GO:0039694">
    <property type="term" value="P:viral RNA genome replication"/>
    <property type="evidence" value="ECO:0007669"/>
    <property type="project" value="InterPro"/>
</dbReference>
<dbReference type="GO" id="GO:0075523">
    <property type="term" value="P:viral translational frameshifting"/>
    <property type="evidence" value="ECO:0007669"/>
    <property type="project" value="UniProtKB-KW"/>
</dbReference>
<dbReference type="GO" id="GO:0019062">
    <property type="term" value="P:virion attachment to host cell"/>
    <property type="evidence" value="ECO:0007669"/>
    <property type="project" value="UniProtKB-KW"/>
</dbReference>
<dbReference type="CDD" id="cd17931">
    <property type="entry name" value="DEXHc_viral_Ns3"/>
    <property type="match status" value="1"/>
</dbReference>
<dbReference type="CDD" id="cd20903">
    <property type="entry name" value="HCV_p7"/>
    <property type="match status" value="1"/>
</dbReference>
<dbReference type="CDD" id="cd23202">
    <property type="entry name" value="Hepacivirus_RdRp"/>
    <property type="match status" value="1"/>
</dbReference>
<dbReference type="FunFam" id="1.10.820.10:FF:000001">
    <property type="entry name" value="Genome polyprotein"/>
    <property type="match status" value="1"/>
</dbReference>
<dbReference type="FunFam" id="1.20.1280.150:FF:000001">
    <property type="entry name" value="Genome polyprotein"/>
    <property type="match status" value="1"/>
</dbReference>
<dbReference type="FunFam" id="2.20.25.210:FF:000001">
    <property type="entry name" value="Genome polyprotein"/>
    <property type="match status" value="1"/>
</dbReference>
<dbReference type="FunFam" id="2.20.25.220:FF:000001">
    <property type="entry name" value="Genome polyprotein"/>
    <property type="match status" value="1"/>
</dbReference>
<dbReference type="FunFam" id="2.30.30.710:FF:000001">
    <property type="entry name" value="Genome polyprotein"/>
    <property type="match status" value="1"/>
</dbReference>
<dbReference type="FunFam" id="2.40.10.10:FF:000029">
    <property type="entry name" value="Genome polyprotein"/>
    <property type="match status" value="1"/>
</dbReference>
<dbReference type="FunFam" id="3.30.160.890:FF:000001">
    <property type="entry name" value="Genome polyprotein"/>
    <property type="match status" value="1"/>
</dbReference>
<dbReference type="FunFam" id="3.30.70.270:FF:000015">
    <property type="entry name" value="Genome polyprotein"/>
    <property type="match status" value="1"/>
</dbReference>
<dbReference type="FunFam" id="3.40.50.300:FF:000557">
    <property type="entry name" value="Genome polyprotein"/>
    <property type="match status" value="1"/>
</dbReference>
<dbReference type="FunFam" id="3.40.50.300:FF:000717">
    <property type="entry name" value="Genome polyprotein"/>
    <property type="match status" value="1"/>
</dbReference>
<dbReference type="FunFam" id="2.40.10.120:FF:000010">
    <property type="entry name" value="NS3 protease"/>
    <property type="match status" value="1"/>
</dbReference>
<dbReference type="Gene3D" id="2.40.10.120">
    <property type="match status" value="1"/>
</dbReference>
<dbReference type="Gene3D" id="3.30.70.270">
    <property type="match status" value="2"/>
</dbReference>
<dbReference type="Gene3D" id="6.10.250.1610">
    <property type="match status" value="1"/>
</dbReference>
<dbReference type="Gene3D" id="6.10.250.1750">
    <property type="match status" value="1"/>
</dbReference>
<dbReference type="Gene3D" id="6.10.250.2920">
    <property type="match status" value="1"/>
</dbReference>
<dbReference type="Gene3D" id="2.20.25.210">
    <property type="entry name" value="Hepatitis C NS5A, domain 1B"/>
    <property type="match status" value="1"/>
</dbReference>
<dbReference type="Gene3D" id="4.10.710.10">
    <property type="entry name" value="Hepatitis C Virus Capsid Protein, Chain A"/>
    <property type="match status" value="1"/>
</dbReference>
<dbReference type="Gene3D" id="3.30.160.890">
    <property type="entry name" value="Hepatitis C virus envelope glycoprotein E1, chain C"/>
    <property type="match status" value="1"/>
</dbReference>
<dbReference type="Gene3D" id="2.30.30.710">
    <property type="entry name" value="Hepatitis C virus non-structural protein NS2, C-terminal domain"/>
    <property type="match status" value="1"/>
</dbReference>
<dbReference type="Gene3D" id="1.20.1280.150">
    <property type="entry name" value="Hepatitis C virus non-structural protein NS2, N-terminal domain"/>
    <property type="match status" value="1"/>
</dbReference>
<dbReference type="Gene3D" id="2.20.25.220">
    <property type="entry name" value="Hepatitis C virus NS5A, 1B domain"/>
    <property type="match status" value="1"/>
</dbReference>
<dbReference type="Gene3D" id="3.40.50.300">
    <property type="entry name" value="P-loop containing nucleotide triphosphate hydrolases"/>
    <property type="match status" value="2"/>
</dbReference>
<dbReference type="Gene3D" id="1.10.820.10">
    <property type="entry name" value="RNA Helicase Chain A , domain 3"/>
    <property type="match status" value="1"/>
</dbReference>
<dbReference type="Gene3D" id="2.40.10.10">
    <property type="entry name" value="Trypsin-like serine proteases"/>
    <property type="match status" value="1"/>
</dbReference>
<dbReference type="InterPro" id="IPR043502">
    <property type="entry name" value="DNA/RNA_pol_sf"/>
</dbReference>
<dbReference type="InterPro" id="IPR011492">
    <property type="entry name" value="Flavi_DEAD"/>
</dbReference>
<dbReference type="InterPro" id="IPR002521">
    <property type="entry name" value="HCV_Core_C"/>
</dbReference>
<dbReference type="InterPro" id="IPR044896">
    <property type="entry name" value="HCV_core_chain_A"/>
</dbReference>
<dbReference type="InterPro" id="IPR002522">
    <property type="entry name" value="HCV_core_N"/>
</dbReference>
<dbReference type="InterPro" id="IPR002519">
    <property type="entry name" value="HCV_Env"/>
</dbReference>
<dbReference type="InterPro" id="IPR002531">
    <property type="entry name" value="HCV_NS1"/>
</dbReference>
<dbReference type="InterPro" id="IPR002518">
    <property type="entry name" value="HCV_NS2"/>
</dbReference>
<dbReference type="InterPro" id="IPR042205">
    <property type="entry name" value="HCV_NS2_C"/>
</dbReference>
<dbReference type="InterPro" id="IPR042209">
    <property type="entry name" value="HCV_NS2_N"/>
</dbReference>
<dbReference type="InterPro" id="IPR000745">
    <property type="entry name" value="HCV_NS4a"/>
</dbReference>
<dbReference type="InterPro" id="IPR001490">
    <property type="entry name" value="HCV_NS4b"/>
</dbReference>
<dbReference type="InterPro" id="IPR002868">
    <property type="entry name" value="HCV_NS5a"/>
</dbReference>
<dbReference type="InterPro" id="IPR013192">
    <property type="entry name" value="HCV_NS5A_1a"/>
</dbReference>
<dbReference type="InterPro" id="IPR013193">
    <property type="entry name" value="HCV_NS5a_1B_dom"/>
</dbReference>
<dbReference type="InterPro" id="IPR038568">
    <property type="entry name" value="HCV_NS5A_1B_sf"/>
</dbReference>
<dbReference type="InterPro" id="IPR024350">
    <property type="entry name" value="HCV_NS5a_C"/>
</dbReference>
<dbReference type="InterPro" id="IPR049913">
    <property type="entry name" value="HCV_p7"/>
</dbReference>
<dbReference type="InterPro" id="IPR014001">
    <property type="entry name" value="Helicase_ATP-bd"/>
</dbReference>
<dbReference type="InterPro" id="IPR001650">
    <property type="entry name" value="Helicase_C-like"/>
</dbReference>
<dbReference type="InterPro" id="IPR004109">
    <property type="entry name" value="HepC_NS3_protease"/>
</dbReference>
<dbReference type="InterPro" id="IPR054175">
    <property type="entry name" value="NS3_helicase_C"/>
</dbReference>
<dbReference type="InterPro" id="IPR038170">
    <property type="entry name" value="NS5A_1a_sf"/>
</dbReference>
<dbReference type="InterPro" id="IPR027417">
    <property type="entry name" value="P-loop_NTPase"/>
</dbReference>
<dbReference type="InterPro" id="IPR009003">
    <property type="entry name" value="Peptidase_S1_PA"/>
</dbReference>
<dbReference type="InterPro" id="IPR043504">
    <property type="entry name" value="Peptidase_S1_PA_chymotrypsin"/>
</dbReference>
<dbReference type="InterPro" id="IPR043128">
    <property type="entry name" value="Rev_trsase/Diguanyl_cyclase"/>
</dbReference>
<dbReference type="InterPro" id="IPR007094">
    <property type="entry name" value="RNA-dir_pol_PSvirus"/>
</dbReference>
<dbReference type="InterPro" id="IPR002166">
    <property type="entry name" value="RNA_pol_HCV"/>
</dbReference>
<dbReference type="Pfam" id="PF07652">
    <property type="entry name" value="Flavi_DEAD"/>
    <property type="match status" value="1"/>
</dbReference>
<dbReference type="Pfam" id="PF01543">
    <property type="entry name" value="HCV_capsid"/>
    <property type="match status" value="1"/>
</dbReference>
<dbReference type="Pfam" id="PF01542">
    <property type="entry name" value="HCV_core"/>
    <property type="match status" value="1"/>
</dbReference>
<dbReference type="Pfam" id="PF01539">
    <property type="entry name" value="HCV_env"/>
    <property type="match status" value="1"/>
</dbReference>
<dbReference type="Pfam" id="PF01560">
    <property type="entry name" value="HCV_NS1"/>
    <property type="match status" value="1"/>
</dbReference>
<dbReference type="Pfam" id="PF01538">
    <property type="entry name" value="HCV_NS2"/>
    <property type="match status" value="1"/>
</dbReference>
<dbReference type="Pfam" id="PF01006">
    <property type="entry name" value="HCV_NS4a"/>
    <property type="match status" value="1"/>
</dbReference>
<dbReference type="Pfam" id="PF01001">
    <property type="entry name" value="HCV_NS4b"/>
    <property type="match status" value="1"/>
</dbReference>
<dbReference type="Pfam" id="PF01506">
    <property type="entry name" value="HCV_NS5a"/>
    <property type="match status" value="1"/>
</dbReference>
<dbReference type="Pfam" id="PF08300">
    <property type="entry name" value="HCV_NS5a_1a"/>
    <property type="match status" value="1"/>
</dbReference>
<dbReference type="Pfam" id="PF08301">
    <property type="entry name" value="HCV_NS5a_1b"/>
    <property type="match status" value="1"/>
</dbReference>
<dbReference type="Pfam" id="PF12941">
    <property type="entry name" value="HCV_NS5a_C"/>
    <property type="match status" value="1"/>
</dbReference>
<dbReference type="Pfam" id="PF22027">
    <property type="entry name" value="NS3_helicase_C"/>
    <property type="match status" value="1"/>
</dbReference>
<dbReference type="Pfam" id="PF02907">
    <property type="entry name" value="Peptidase_S29"/>
    <property type="match status" value="1"/>
</dbReference>
<dbReference type="Pfam" id="PF00998">
    <property type="entry name" value="RdRP_3"/>
    <property type="match status" value="1"/>
</dbReference>
<dbReference type="SMART" id="SM00487">
    <property type="entry name" value="DEXDc"/>
    <property type="match status" value="1"/>
</dbReference>
<dbReference type="SMART" id="SM00490">
    <property type="entry name" value="HELICc"/>
    <property type="match status" value="1"/>
</dbReference>
<dbReference type="SUPFAM" id="SSF56672">
    <property type="entry name" value="DNA/RNA polymerases"/>
    <property type="match status" value="1"/>
</dbReference>
<dbReference type="SUPFAM" id="SSF52540">
    <property type="entry name" value="P-loop containing nucleoside triphosphate hydrolases"/>
    <property type="match status" value="2"/>
</dbReference>
<dbReference type="SUPFAM" id="SSF50494">
    <property type="entry name" value="Trypsin-like serine proteases"/>
    <property type="match status" value="1"/>
</dbReference>
<dbReference type="PROSITE" id="PS51693">
    <property type="entry name" value="HCV_NS2_PRO"/>
    <property type="match status" value="1"/>
</dbReference>
<dbReference type="PROSITE" id="PS51192">
    <property type="entry name" value="HELICASE_ATP_BIND_1"/>
    <property type="match status" value="1"/>
</dbReference>
<dbReference type="PROSITE" id="PS51194">
    <property type="entry name" value="HELICASE_CTER"/>
    <property type="match status" value="1"/>
</dbReference>
<dbReference type="PROSITE" id="PS51822">
    <property type="entry name" value="HV_PV_NS3_PRO"/>
    <property type="match status" value="1"/>
</dbReference>
<dbReference type="PROSITE" id="PS50507">
    <property type="entry name" value="RDRP_SSRNA_POS"/>
    <property type="match status" value="1"/>
</dbReference>
<evidence type="ECO:0000250" key="1"/>
<evidence type="ECO:0000250" key="2">
    <source>
        <dbReference type="UniProtKB" id="O92972"/>
    </source>
</evidence>
<evidence type="ECO:0000250" key="3">
    <source>
        <dbReference type="UniProtKB" id="P26662"/>
    </source>
</evidence>
<evidence type="ECO:0000250" key="4">
    <source>
        <dbReference type="UniProtKB" id="P26663"/>
    </source>
</evidence>
<evidence type="ECO:0000250" key="5">
    <source>
        <dbReference type="UniProtKB" id="P27958"/>
    </source>
</evidence>
<evidence type="ECO:0000250" key="6">
    <source>
        <dbReference type="UniProtKB" id="P29846"/>
    </source>
</evidence>
<evidence type="ECO:0000250" key="7">
    <source>
        <dbReference type="UniProtKB" id="Q01403"/>
    </source>
</evidence>
<evidence type="ECO:0000250" key="8">
    <source>
        <dbReference type="UniProtKB" id="Q03463"/>
    </source>
</evidence>
<evidence type="ECO:0000250" key="9">
    <source>
        <dbReference type="UniProtKB" id="Q5EG65"/>
    </source>
</evidence>
<evidence type="ECO:0000250" key="10">
    <source>
        <dbReference type="UniProtKB" id="Q913V3"/>
    </source>
</evidence>
<evidence type="ECO:0000250" key="11">
    <source>
        <dbReference type="UniProtKB" id="Q99IB8"/>
    </source>
</evidence>
<evidence type="ECO:0000250" key="12">
    <source>
        <dbReference type="UniProtKB" id="Q9WMX2"/>
    </source>
</evidence>
<evidence type="ECO:0000255" key="13"/>
<evidence type="ECO:0000255" key="14">
    <source>
        <dbReference type="PROSITE-ProRule" id="PRU00539"/>
    </source>
</evidence>
<evidence type="ECO:0000255" key="15">
    <source>
        <dbReference type="PROSITE-ProRule" id="PRU00541"/>
    </source>
</evidence>
<evidence type="ECO:0000255" key="16">
    <source>
        <dbReference type="PROSITE-ProRule" id="PRU01030"/>
    </source>
</evidence>
<evidence type="ECO:0000255" key="17">
    <source>
        <dbReference type="PROSITE-ProRule" id="PRU01166"/>
    </source>
</evidence>
<evidence type="ECO:0000256" key="18">
    <source>
        <dbReference type="SAM" id="MobiDB-lite"/>
    </source>
</evidence>
<evidence type="ECO:0000269" key="19">
    <source>
    </source>
</evidence>
<evidence type="ECO:0000269" key="20">
    <source>
    </source>
</evidence>
<evidence type="ECO:0000269" key="21">
    <source>
    </source>
</evidence>
<evidence type="ECO:0000269" key="22">
    <source>
    </source>
</evidence>
<evidence type="ECO:0000269" key="23">
    <source>
    </source>
</evidence>
<evidence type="ECO:0000269" key="24">
    <source>
    </source>
</evidence>
<evidence type="ECO:0000269" key="25">
    <source>
    </source>
</evidence>
<evidence type="ECO:0000269" key="26">
    <source>
    </source>
</evidence>
<evidence type="ECO:0000269" key="27">
    <source>
    </source>
</evidence>
<evidence type="ECO:0000269" key="28">
    <source>
    </source>
</evidence>
<evidence type="ECO:0000269" key="29">
    <source>
    </source>
</evidence>
<evidence type="ECO:0000269" key="30">
    <source>
    </source>
</evidence>
<evidence type="ECO:0000269" key="31">
    <source>
    </source>
</evidence>
<evidence type="ECO:0000305" key="32"/>
<evidence type="ECO:0000305" key="33">
    <source>
    </source>
</evidence>
<evidence type="ECO:0007829" key="34">
    <source>
        <dbReference type="PDB" id="2GVF"/>
    </source>
</evidence>
<evidence type="ECO:0007829" key="35">
    <source>
        <dbReference type="PDB" id="3EYD"/>
    </source>
</evidence>
<evidence type="ECO:0007829" key="36">
    <source>
        <dbReference type="PDB" id="3HKW"/>
    </source>
</evidence>
<evidence type="ECO:0007829" key="37">
    <source>
        <dbReference type="PDB" id="3QGI"/>
    </source>
</evidence>
<evidence type="ECO:0007829" key="38">
    <source>
        <dbReference type="PDB" id="3SU4"/>
    </source>
</evidence>
<evidence type="ECO:0007829" key="39">
    <source>
        <dbReference type="PDB" id="6MVO"/>
    </source>
</evidence>
<evidence type="ECO:0007829" key="40">
    <source>
        <dbReference type="PDB" id="7MME"/>
    </source>
</evidence>
<protein>
    <recommendedName>
        <fullName>Genome polyprotein</fullName>
    </recommendedName>
    <component>
        <recommendedName>
            <fullName>Core protein precursor</fullName>
        </recommendedName>
        <alternativeName>
            <fullName>Capsid protein C</fullName>
        </alternativeName>
        <alternativeName>
            <fullName>p23</fullName>
        </alternativeName>
    </component>
    <component>
        <recommendedName>
            <fullName>Mature core protein</fullName>
        </recommendedName>
        <alternativeName>
            <fullName>p21</fullName>
        </alternativeName>
    </component>
    <component>
        <recommendedName>
            <fullName>Envelope glycoprotein E1</fullName>
        </recommendedName>
        <alternativeName>
            <fullName>gp32</fullName>
        </alternativeName>
        <alternativeName>
            <fullName>gp35</fullName>
        </alternativeName>
    </component>
    <component>
        <recommendedName>
            <fullName>Envelope glycoprotein E2</fullName>
        </recommendedName>
        <alternativeName>
            <fullName>NS1</fullName>
        </alternativeName>
        <alternativeName>
            <fullName>gp68</fullName>
        </alternativeName>
        <alternativeName>
            <fullName>gp70</fullName>
        </alternativeName>
    </component>
    <component>
        <recommendedName>
            <fullName>Viroporin p7</fullName>
        </recommendedName>
    </component>
    <component>
        <recommendedName>
            <fullName>Protease NS2</fullName>
            <shortName>p23</shortName>
            <ecNumber evidence="4">3.4.22.-</ecNumber>
        </recommendedName>
        <alternativeName>
            <fullName>Non-structural protein 2</fullName>
            <shortName>NS2</shortName>
        </alternativeName>
    </component>
    <component>
        <recommendedName>
            <fullName>Serine protease/helicase NS3</fullName>
            <ecNumber evidence="5">3.4.21.98</ecNumber>
            <ecNumber evidence="5">3.6.1.15</ecNumber>
            <ecNumber evidence="5">3.6.4.13</ecNumber>
        </recommendedName>
        <alternativeName>
            <fullName>Hepacivirin</fullName>
        </alternativeName>
        <alternativeName>
            <fullName evidence="5">NS3 helicase</fullName>
        </alternativeName>
        <alternativeName>
            <fullName evidence="5">NS3 protease</fullName>
        </alternativeName>
        <alternativeName>
            <fullName>NS3P</fullName>
        </alternativeName>
        <alternativeName>
            <fullName>Viroporin p70</fullName>
        </alternativeName>
    </component>
    <component>
        <recommendedName>
            <fullName>Non-structural protein 4A</fullName>
            <shortName>NS4A</shortName>
        </recommendedName>
        <alternativeName>
            <fullName>p8</fullName>
        </alternativeName>
    </component>
    <component>
        <recommendedName>
            <fullName>Non-structural protein 4B</fullName>
            <shortName>NS4B</shortName>
        </recommendedName>
        <alternativeName>
            <fullName>p27</fullName>
        </alternativeName>
    </component>
    <component>
        <recommendedName>
            <fullName>Non-structural protein 5A</fullName>
            <shortName>NS5A</shortName>
        </recommendedName>
        <alternativeName>
            <fullName>p56/58</fullName>
        </alternativeName>
    </component>
    <component>
        <recommendedName>
            <fullName>RNA-directed RNA polymerase</fullName>
            <ecNumber evidence="5">2.7.7.48</ecNumber>
        </recommendedName>
        <alternativeName>
            <fullName>NS5B</fullName>
        </alternativeName>
        <alternativeName>
            <fullName>p68</fullName>
        </alternativeName>
    </component>
</protein>
<organismHost>
    <name type="scientific">Homo sapiens</name>
    <name type="common">Human</name>
    <dbReference type="NCBI Taxonomy" id="9606"/>
</organismHost>
<accession>P26664</accession>
<accession>Q9IFE5</accession>
<name>POLG_HCV1</name>
<organism>
    <name type="scientific">Hepatitis C virus genotype 1a (isolate 1)</name>
    <name type="common">HCV</name>
    <dbReference type="NCBI Taxonomy" id="11104"/>
    <lineage>
        <taxon>Viruses</taxon>
        <taxon>Riboviria</taxon>
        <taxon>Orthornavirae</taxon>
        <taxon>Kitrinoviricota</taxon>
        <taxon>Flasuviricetes</taxon>
        <taxon>Amarillovirales</taxon>
        <taxon>Flaviviridae</taxon>
        <taxon>Hepacivirus</taxon>
        <taxon>Hepacivirus hominis</taxon>
        <taxon>hepatitis C virus genotype 1a</taxon>
    </lineage>
</organism>
<feature type="initiator methionine" description="Removed; by host" evidence="25">
    <location>
        <position position="1"/>
    </location>
</feature>
<feature type="chain" id="PRO_0000450851" description="Genome polyprotein">
    <location>
        <begin position="2"/>
        <end position="3011"/>
    </location>
</feature>
<feature type="chain" id="PRO_0000037517" description="Core protein precursor">
    <location>
        <begin position="2"/>
        <end position="191"/>
    </location>
</feature>
<feature type="chain" id="PRO_0000037518" description="Mature core protein">
    <location>
        <begin position="2"/>
        <end position="177"/>
    </location>
</feature>
<feature type="propeptide" id="PRO_0000037519" description="ER anchor for the core protein, removed in mature form by host signal peptidase" evidence="25">
    <location>
        <begin position="178"/>
        <end position="191"/>
    </location>
</feature>
<feature type="chain" id="PRO_0000037520" description="Envelope glycoprotein E1">
    <location>
        <begin position="192"/>
        <end position="383"/>
    </location>
</feature>
<feature type="chain" id="PRO_0000037521" description="Envelope glycoprotein E2">
    <location>
        <begin position="384"/>
        <end position="746"/>
    </location>
</feature>
<feature type="chain" id="PRO_0000037522" description="Viroporin p7">
    <location>
        <begin position="747"/>
        <end position="809"/>
    </location>
</feature>
<feature type="chain" id="PRO_0000037523" description="Protease NS2" evidence="16">
    <location>
        <begin position="810"/>
        <end position="1026"/>
    </location>
</feature>
<feature type="chain" id="PRO_0000037524" description="Serine protease/helicase NS3">
    <location>
        <begin position="1027"/>
        <end position="1657"/>
    </location>
</feature>
<feature type="chain" id="PRO_0000037525" description="Non-structural protein 4A">
    <location>
        <begin position="1658"/>
        <end position="1711"/>
    </location>
</feature>
<feature type="chain" id="PRO_0000037526" description="Non-structural protein 4B">
    <location>
        <begin position="1712"/>
        <end position="1972"/>
    </location>
</feature>
<feature type="chain" id="PRO_0000037527" description="Non-structural protein 5A">
    <location>
        <begin position="1973"/>
        <end position="2420"/>
    </location>
</feature>
<feature type="chain" id="PRO_0000037528" description="RNA-directed RNA polymerase">
    <location>
        <begin position="2421"/>
        <end position="3011"/>
    </location>
</feature>
<feature type="topological domain" description="Cytoplasmic" evidence="13">
    <location>
        <begin position="2"/>
        <end position="168"/>
    </location>
</feature>
<feature type="transmembrane region" description="Helical" evidence="13">
    <location>
        <begin position="169"/>
        <end position="189"/>
    </location>
</feature>
<feature type="topological domain" description="Lumenal" evidence="5">
    <location>
        <begin position="190"/>
        <end position="358"/>
    </location>
</feature>
<feature type="transmembrane region" description="Helical" evidence="5">
    <location>
        <begin position="359"/>
        <end position="379"/>
    </location>
</feature>
<feature type="topological domain" description="Lumenal" evidence="5">
    <location>
        <begin position="380"/>
        <end position="725"/>
    </location>
</feature>
<feature type="transmembrane region" description="Helical" evidence="5">
    <location>
        <begin position="726"/>
        <end position="746"/>
    </location>
</feature>
<feature type="topological domain" description="Lumenal" evidence="5">
    <location>
        <begin position="747"/>
        <end position="757"/>
    </location>
</feature>
<feature type="transmembrane region" description="Helical" evidence="5">
    <location>
        <begin position="758"/>
        <end position="778"/>
    </location>
</feature>
<feature type="topological domain" description="Cytoplasmic" evidence="5">
    <location>
        <begin position="779"/>
        <end position="781"/>
    </location>
</feature>
<feature type="transmembrane region" description="Helical" evidence="5">
    <location>
        <begin position="782"/>
        <end position="803"/>
    </location>
</feature>
<feature type="topological domain" description="Lumenal" evidence="21">
    <location>
        <begin position="804"/>
        <end position="813"/>
    </location>
</feature>
<feature type="transmembrane region" description="Helical" evidence="12">
    <location>
        <begin position="814"/>
        <end position="834"/>
    </location>
</feature>
<feature type="topological domain" description="Cytoplasmic" evidence="12">
    <location>
        <begin position="835"/>
        <end position="838"/>
    </location>
</feature>
<feature type="transmembrane region" description="Helical" evidence="12">
    <location>
        <begin position="839"/>
        <end position="859"/>
    </location>
</feature>
<feature type="topological domain" description="Lumenal" evidence="12">
    <location>
        <begin position="860"/>
        <end position="881"/>
    </location>
</feature>
<feature type="transmembrane region" description="Helical" evidence="12">
    <location>
        <begin position="882"/>
        <end position="902"/>
    </location>
</feature>
<feature type="topological domain" description="Cytoplasmic" evidence="12">
    <location>
        <begin position="903"/>
        <end position="1657"/>
    </location>
</feature>
<feature type="transmembrane region" description="Helical" evidence="13">
    <location>
        <begin position="1658"/>
        <end position="1678"/>
    </location>
</feature>
<feature type="topological domain" description="Cytoplasmic" evidence="13">
    <location>
        <begin position="1679"/>
        <end position="1805"/>
    </location>
</feature>
<feature type="transmembrane region" description="Helical" evidence="13">
    <location>
        <begin position="1806"/>
        <end position="1826"/>
    </location>
</feature>
<feature type="topological domain" description="Lumenal" evidence="13">
    <location>
        <begin position="1827"/>
        <end position="1828"/>
    </location>
</feature>
<feature type="transmembrane region" description="Helical" evidence="13">
    <location>
        <begin position="1829"/>
        <end position="1849"/>
    </location>
</feature>
<feature type="topological domain" description="Cytoplasmic" evidence="13">
    <location>
        <position position="1850"/>
    </location>
</feature>
<feature type="transmembrane region" description="Helical" evidence="13">
    <location>
        <begin position="1851"/>
        <end position="1871"/>
    </location>
</feature>
<feature type="topological domain" description="Lumenal" evidence="13">
    <location>
        <begin position="1872"/>
        <end position="1881"/>
    </location>
</feature>
<feature type="transmembrane region" description="Helical" evidence="13">
    <location>
        <begin position="1882"/>
        <end position="1902"/>
    </location>
</feature>
<feature type="topological domain" description="Cytoplasmic" evidence="13">
    <location>
        <begin position="1903"/>
        <end position="1972"/>
    </location>
</feature>
<feature type="intramembrane region" evidence="5">
    <location>
        <begin position="1973"/>
        <end position="2003"/>
    </location>
</feature>
<feature type="topological domain" description="Cytoplasmic" evidence="5">
    <location>
        <begin position="2004"/>
        <end position="2990"/>
    </location>
</feature>
<feature type="transmembrane region" description="Helical" evidence="5">
    <location>
        <begin position="2991"/>
        <end position="3011"/>
    </location>
</feature>
<feature type="domain" description="Peptidase C18" evidence="16">
    <location>
        <begin position="899"/>
        <end position="1026"/>
    </location>
</feature>
<feature type="domain" description="Peptidase S29" evidence="17">
    <location>
        <begin position="1027"/>
        <end position="1208"/>
    </location>
</feature>
<feature type="domain" description="Helicase ATP-binding" evidence="15">
    <location>
        <begin position="1217"/>
        <end position="1369"/>
    </location>
</feature>
<feature type="domain" description="RdRp catalytic" evidence="14">
    <location>
        <begin position="2634"/>
        <end position="2752"/>
    </location>
</feature>
<feature type="region of interest" description="Disordered" evidence="5">
    <location>
        <begin position="2"/>
        <end position="75"/>
    </location>
</feature>
<feature type="region of interest" description="Interaction with DDX3X" evidence="9">
    <location>
        <begin position="2"/>
        <end position="59"/>
    </location>
</feature>
<feature type="region of interest" description="Interaction with EIF2AK2/PKR" evidence="3">
    <location>
        <begin position="2"/>
        <end position="58"/>
    </location>
</feature>
<feature type="region of interest" description="Interaction with STAT1" evidence="3">
    <location>
        <begin position="2"/>
        <end position="23"/>
    </location>
</feature>
<feature type="region of interest" description="Important for endoplasmic reticulum and mitochondrial localization" evidence="3">
    <location>
        <begin position="112"/>
        <end position="152"/>
    </location>
</feature>
<feature type="region of interest" description="Interaction with APOA2" evidence="6">
    <location>
        <begin position="122"/>
        <end position="173"/>
    </location>
</feature>
<feature type="region of interest" description="Important for lipid droplets localization" evidence="5">
    <location>
        <begin position="164"/>
        <end position="167"/>
    </location>
</feature>
<feature type="region of interest" description="Important for fusion" evidence="5">
    <location>
        <begin position="265"/>
        <end position="296"/>
    </location>
</feature>
<feature type="region of interest" description="HVR1" evidence="5">
    <location>
        <begin position="385"/>
        <end position="411"/>
    </location>
</feature>
<feature type="region of interest" description="HVR2" evidence="5">
    <location>
        <begin position="474"/>
        <end position="480"/>
    </location>
</feature>
<feature type="region of interest" description="CD81-binding 1" evidence="4">
    <location>
        <begin position="481"/>
        <end position="493"/>
    </location>
</feature>
<feature type="region of interest" description="CD81-binding 2" evidence="4">
    <location>
        <begin position="543"/>
        <end position="551"/>
    </location>
</feature>
<feature type="region of interest" description="EIF2AK2/eIF2-alpha phosphorylation homology domain (PePHD)">
    <location>
        <begin position="660"/>
        <end position="671"/>
    </location>
</feature>
<feature type="region of interest" description="Protease NS2-3" evidence="4">
    <location>
        <begin position="904"/>
        <end position="1206"/>
    </location>
</feature>
<feature type="region of interest" description="Interaction with host SCPS1" evidence="11">
    <location>
        <begin position="929"/>
        <end position="949"/>
    </location>
</feature>
<feature type="region of interest" description="RNA-binding" evidence="4">
    <location>
        <begin position="1486"/>
        <end position="1497"/>
    </location>
</feature>
<feature type="region of interest" description="NS3-binding" evidence="5">
    <location>
        <begin position="1679"/>
        <end position="1690"/>
    </location>
</feature>
<feature type="region of interest" description="Glycine zipper" evidence="11">
    <location>
        <begin position="1833"/>
        <end position="1861"/>
    </location>
</feature>
<feature type="region of interest" description="Membrane-binding" evidence="5">
    <location>
        <begin position="1978"/>
        <end position="1998"/>
    </location>
</feature>
<feature type="region of interest" description="RNA-binding" evidence="5">
    <location>
        <begin position="2005"/>
        <end position="2221"/>
    </location>
</feature>
<feature type="region of interest" description="Transcriptional activation" evidence="13">
    <location>
        <begin position="2120"/>
        <end position="2332"/>
    </location>
</feature>
<feature type="region of interest" description="FKBP8-binding" evidence="3">
    <location>
        <begin position="2120"/>
        <end position="2208"/>
    </location>
</feature>
<feature type="region of interest" description="Interaction with non-structural protein 4A" evidence="3">
    <location>
        <begin position="2135"/>
        <end position="2139"/>
    </location>
</feature>
<feature type="region of interest" description="Interaction with host SKP2" evidence="5">
    <location>
        <begin position="2189"/>
        <end position="2441"/>
    </location>
</feature>
<feature type="region of interest" description="ISDR" evidence="3">
    <location>
        <begin position="2206"/>
        <end position="2245"/>
    </location>
</feature>
<feature type="region of interest" description="EIF2AK2/PKR-binding" evidence="13">
    <location>
        <begin position="2210"/>
        <end position="2275"/>
    </location>
</feature>
<feature type="region of interest" description="NS4B-binding" evidence="13">
    <location>
        <begin position="2249"/>
        <end position="2306"/>
    </location>
</feature>
<feature type="region of interest" description="Disordered" evidence="18">
    <location>
        <begin position="2312"/>
        <end position="2334"/>
    </location>
</feature>
<feature type="region of interest" description="Interaction with host IFI27" evidence="5">
    <location>
        <begin position="2332"/>
        <end position="2441"/>
    </location>
</feature>
<feature type="region of interest" description="Disordered" evidence="18">
    <location>
        <begin position="2351"/>
        <end position="2408"/>
    </location>
</feature>
<feature type="region of interest" description="V3" evidence="1">
    <location>
        <begin position="2354"/>
        <end position="2377"/>
    </location>
</feature>
<feature type="short sequence motif" description="Nuclear localization signal" evidence="11">
    <location>
        <begin position="5"/>
        <end position="13"/>
    </location>
</feature>
<feature type="short sequence motif" description="Nuclear localization signal" evidence="11">
    <location>
        <begin position="38"/>
        <end position="43"/>
    </location>
</feature>
<feature type="short sequence motif" description="Nuclear localization signal" evidence="11">
    <location>
        <begin position="58"/>
        <end position="64"/>
    </location>
</feature>
<feature type="short sequence motif" description="Nuclear localization signal" evidence="11">
    <location>
        <begin position="66"/>
        <end position="71"/>
    </location>
</feature>
<feature type="short sequence motif" description="DECH box" evidence="11">
    <location>
        <begin position="1316"/>
        <end position="1319"/>
    </location>
</feature>
<feature type="short sequence motif" description="SH3-binding" evidence="13">
    <location>
        <begin position="2322"/>
        <end position="2325"/>
    </location>
</feature>
<feature type="short sequence motif" description="Nuclear localization signal" evidence="3">
    <location>
        <begin position="2326"/>
        <end position="2334"/>
    </location>
</feature>
<feature type="compositionally biased region" description="Basic residues" evidence="18">
    <location>
        <begin position="7"/>
        <end position="16"/>
    </location>
</feature>
<feature type="compositionally biased region" description="Low complexity" evidence="18">
    <location>
        <begin position="32"/>
        <end position="47"/>
    </location>
</feature>
<feature type="compositionally biased region" description="Basic residues" evidence="18">
    <location>
        <begin position="58"/>
        <end position="68"/>
    </location>
</feature>
<feature type="compositionally biased region" description="Pro residues" evidence="18">
    <location>
        <begin position="2315"/>
        <end position="2326"/>
    </location>
</feature>
<feature type="compositionally biased region" description="Low complexity" evidence="18">
    <location>
        <begin position="2351"/>
        <end position="2369"/>
    </location>
</feature>
<feature type="active site" description="For protease NS2 activity; shared with dimeric partner" evidence="16">
    <location>
        <position position="952"/>
    </location>
</feature>
<feature type="active site" description="For protease NS2 activity; shared with dimeric partner" evidence="16">
    <location>
        <position position="972"/>
    </location>
</feature>
<feature type="active site" description="For protease NS2 activity; shared with dimeric partner" evidence="16">
    <location>
        <position position="993"/>
    </location>
</feature>
<feature type="active site" description="Charge relay system; for serine protease NS3 activity" evidence="17">
    <location>
        <position position="1083"/>
    </location>
</feature>
<feature type="active site" description="Charge relay system; for serine protease NS3 activity" evidence="17">
    <location>
        <position position="1107"/>
    </location>
</feature>
<feature type="active site" description="Charge relay system; for serine protease NS3 activity" evidence="17">
    <location>
        <position position="1165"/>
    </location>
</feature>
<feature type="binding site" evidence="17">
    <location>
        <position position="1123"/>
    </location>
    <ligand>
        <name>Zn(2+)</name>
        <dbReference type="ChEBI" id="CHEBI:29105"/>
        <label>1</label>
        <note>structural; for NS3 protease activity and NS2/3 auto-cleavage activity</note>
    </ligand>
</feature>
<feature type="binding site" evidence="17">
    <location>
        <position position="1125"/>
    </location>
    <ligand>
        <name>Zn(2+)</name>
        <dbReference type="ChEBI" id="CHEBI:29105"/>
        <label>1</label>
        <note>structural; for NS3 protease activity and NS2/3 auto-cleavage activity</note>
    </ligand>
</feature>
<feature type="binding site" evidence="17">
    <location>
        <position position="1171"/>
    </location>
    <ligand>
        <name>Zn(2+)</name>
        <dbReference type="ChEBI" id="CHEBI:29105"/>
        <label>1</label>
        <note>structural; for NS3 protease activity and NS2/3 auto-cleavage activity</note>
    </ligand>
</feature>
<feature type="binding site" evidence="17">
    <location>
        <position position="1175"/>
    </location>
    <ligand>
        <name>Zn(2+)</name>
        <dbReference type="ChEBI" id="CHEBI:29105"/>
        <label>1</label>
        <note>structural; for NS3 protease activity and NS2/3 auto-cleavage activity</note>
    </ligand>
</feature>
<feature type="binding site" evidence="15">
    <location>
        <begin position="1230"/>
        <end position="1237"/>
    </location>
    <ligand>
        <name>ATP</name>
        <dbReference type="ChEBI" id="CHEBI:30616"/>
    </ligand>
</feature>
<feature type="binding site" evidence="12">
    <location>
        <position position="1237"/>
    </location>
    <ligand>
        <name>Mg(2+)</name>
        <dbReference type="ChEBI" id="CHEBI:18420"/>
        <label>1</label>
        <note>catalytic; for NS3 helicase activity</note>
    </ligand>
</feature>
<feature type="binding site" evidence="12">
    <location>
        <position position="1317"/>
    </location>
    <ligand>
        <name>Mg(2+)</name>
        <dbReference type="ChEBI" id="CHEBI:18420"/>
        <label>1</label>
        <note>catalytic; for NS3 helicase activity</note>
    </ligand>
</feature>
<feature type="binding site" evidence="12">
    <location>
        <position position="2011"/>
    </location>
    <ligand>
        <name>Zn(2+)</name>
        <dbReference type="ChEBI" id="CHEBI:29105"/>
        <label>2</label>
        <note>structural</note>
    </ligand>
</feature>
<feature type="binding site" evidence="12">
    <location>
        <position position="2029"/>
    </location>
    <ligand>
        <name>Zn(2+)</name>
        <dbReference type="ChEBI" id="CHEBI:29105"/>
        <label>2</label>
        <note>structural</note>
    </ligand>
</feature>
<feature type="binding site" evidence="12">
    <location>
        <position position="2031"/>
    </location>
    <ligand>
        <name>Zn(2+)</name>
        <dbReference type="ChEBI" id="CHEBI:29105"/>
        <label>2</label>
        <note>structural</note>
    </ligand>
</feature>
<feature type="binding site" evidence="12">
    <location>
        <position position="2052"/>
    </location>
    <ligand>
        <name>Zn(2+)</name>
        <dbReference type="ChEBI" id="CHEBI:29105"/>
        <label>2</label>
        <note>structural</note>
    </ligand>
</feature>
<feature type="binding site" evidence="4">
    <location>
        <position position="2640"/>
    </location>
    <ligand>
        <name>Mg(2+)</name>
        <dbReference type="ChEBI" id="CHEBI:18420"/>
        <label>2</label>
        <note>catalytic; for RNA-directed RNA polymerase activity</note>
    </ligand>
</feature>
<feature type="binding site" evidence="4">
    <location>
        <position position="2738"/>
    </location>
    <ligand>
        <name>Mg(2+)</name>
        <dbReference type="ChEBI" id="CHEBI:18420"/>
        <label>2</label>
        <note>catalytic; for RNA-directed RNA polymerase activity</note>
    </ligand>
</feature>
<feature type="binding site" evidence="4">
    <location>
        <position position="2739"/>
    </location>
    <ligand>
        <name>Mg(2+)</name>
        <dbReference type="ChEBI" id="CHEBI:18420"/>
        <label>2</label>
        <note>catalytic; for RNA-directed RNA polymerase activity</note>
    </ligand>
</feature>
<feature type="site" description="Cleavage; by host signal peptide peptidase" evidence="33">
    <location>
        <begin position="177"/>
        <end position="178"/>
    </location>
</feature>
<feature type="site" description="Cleavage; by host signal peptidase" evidence="3">
    <location>
        <begin position="191"/>
        <end position="192"/>
    </location>
</feature>
<feature type="site" description="Cleavage; by host signal peptidase" evidence="3">
    <location>
        <begin position="383"/>
        <end position="384"/>
    </location>
</feature>
<feature type="site" description="Cleavage; by host signal peptidase" evidence="1">
    <location>
        <begin position="746"/>
        <end position="747"/>
    </location>
</feature>
<feature type="site" description="Cleavage; by host signal peptidase" evidence="1">
    <location>
        <begin position="809"/>
        <end position="810"/>
    </location>
</feature>
<feature type="site" description="Cleavage; by protease NS2" evidence="16">
    <location>
        <begin position="1026"/>
        <end position="1027"/>
    </location>
</feature>
<feature type="site" description="Cleavage; by serine protease/helicase NS3" evidence="5">
    <location>
        <begin position="1657"/>
        <end position="1658"/>
    </location>
</feature>
<feature type="site" description="Cleavage; by serine protease/helicase NS3" evidence="5">
    <location>
        <begin position="1711"/>
        <end position="1712"/>
    </location>
</feature>
<feature type="site" description="Cleavage; by serine protease/helicase NS3" evidence="5">
    <location>
        <begin position="1972"/>
        <end position="1973"/>
    </location>
</feature>
<feature type="site" description="Cleavage; by serine protease/helicase NS3" evidence="5">
    <location>
        <begin position="2420"/>
        <end position="2421"/>
    </location>
</feature>
<feature type="modified residue" description="N-acetylserine; by host" evidence="10">
    <location>
        <position position="2"/>
    </location>
</feature>
<feature type="modified residue" description="Phosphoserine; by host" evidence="7">
    <location>
        <position position="53"/>
    </location>
</feature>
<feature type="modified residue" description="Phosphoserine; by host" evidence="7">
    <location>
        <position position="99"/>
    </location>
</feature>
<feature type="modified residue" description="Phosphoserine; by host PKA" evidence="7">
    <location>
        <position position="116"/>
    </location>
</feature>
<feature type="modified residue" description="Phosphoserine; by host; in p56" evidence="3">
    <location>
        <position position="2194"/>
    </location>
</feature>
<feature type="modified residue" description="Phosphoserine; by host; in p58" evidence="3">
    <location>
        <position position="2197"/>
    </location>
</feature>
<feature type="modified residue" description="Phosphoserine; by host; in p58" evidence="3">
    <location>
        <position position="2201"/>
    </location>
</feature>
<feature type="modified residue" description="Phosphoserine; by host; in p58" evidence="3">
    <location>
        <position position="2204"/>
    </location>
</feature>
<feature type="modified residue" description="Phosphoserine; by host; in p58" evidence="11">
    <location>
        <position position="2207"/>
    </location>
</feature>
<feature type="modified residue" description="Phosphoserine; by host; in p58" evidence="11">
    <location>
        <position position="2210"/>
    </location>
</feature>
<feature type="modified residue" description="Phosphoserine; by host" evidence="5">
    <location>
        <position position="2321"/>
    </location>
</feature>
<feature type="modified residue" description="Phosphoserine; by host" evidence="3">
    <location>
        <position position="2449"/>
    </location>
</feature>
<feature type="modified residue" description="Phosphoserine; by host" evidence="3">
    <location>
        <position position="2462"/>
    </location>
</feature>
<feature type="lipid moiety-binding region" description="S-palmitoyl cysteine; by host" evidence="5">
    <location>
        <position position="922"/>
    </location>
</feature>
<feature type="lipid moiety-binding region" description="S-palmitoyl cysteine; by host" evidence="5">
    <location>
        <position position="1968"/>
    </location>
</feature>
<feature type="lipid moiety-binding region" description="S-palmitoyl cysteine; by host" evidence="5">
    <location>
        <position position="1972"/>
    </location>
</feature>
<feature type="glycosylation site" description="N-linked (GlcNAc...) asparagine; by host" evidence="5">
    <location>
        <position position="196"/>
    </location>
</feature>
<feature type="glycosylation site" description="N-linked (GlcNAc...) asparagine; by host" evidence="5">
    <location>
        <position position="209"/>
    </location>
</feature>
<feature type="glycosylation site" description="N-linked (GlcNAc...) asparagine; by host" evidence="5">
    <location>
        <position position="234"/>
    </location>
</feature>
<feature type="glycosylation site" description="N-linked (GlcNAc...) asparagine; by host" evidence="5">
    <location>
        <position position="305"/>
    </location>
</feature>
<feature type="glycosylation site" description="N-linked (GlcNAc...) (high mannose) asparagine; by host" evidence="5">
    <location>
        <position position="417"/>
    </location>
</feature>
<feature type="glycosylation site" description="N-linked (GlcNAc...) (high mannose) asparagine; by host" evidence="5">
    <location>
        <position position="423"/>
    </location>
</feature>
<feature type="glycosylation site" description="N-linked (GlcNAc...) (high mannose) asparagine; by host" evidence="5">
    <location>
        <position position="430"/>
    </location>
</feature>
<feature type="glycosylation site" description="N-linked (GlcNAc...) (high mannose) asparagine; by host" evidence="5">
    <location>
        <position position="448"/>
    </location>
</feature>
<feature type="glycosylation site" description="N-linked (GlcNAc...) asparagine; by host" evidence="13">
    <location>
        <position position="476"/>
    </location>
</feature>
<feature type="glycosylation site" description="N-linked (GlcNAc...) (high mannose) asparagine; by host" evidence="5">
    <location>
        <position position="532"/>
    </location>
</feature>
<feature type="glycosylation site" description="N-linked (GlcNAc...) (high mannose) asparagine; by host" evidence="5">
    <location>
        <position position="556"/>
    </location>
</feature>
<feature type="glycosylation site" description="N-linked (GlcNAc...) (high mannose) asparagine; by host" evidence="5">
    <location>
        <position position="576"/>
    </location>
</feature>
<feature type="glycosylation site" description="N-linked (GlcNAc...) (high mannose) asparagine; by host" evidence="5">
    <location>
        <position position="623"/>
    </location>
</feature>
<feature type="glycosylation site" description="N-linked (GlcNAc...) (high mannose) asparagine; by host" evidence="5">
    <location>
        <position position="645"/>
    </location>
</feature>
<feature type="disulfide bond" evidence="5">
    <location>
        <begin position="429"/>
        <end position="552"/>
    </location>
</feature>
<feature type="disulfide bond" evidence="5">
    <location>
        <begin position="452"/>
        <end position="459"/>
    </location>
</feature>
<feature type="disulfide bond" evidence="5">
    <location>
        <begin position="486"/>
        <end position="494"/>
    </location>
</feature>
<feature type="disulfide bond" evidence="5">
    <location>
        <begin position="503"/>
        <end position="508"/>
    </location>
</feature>
<feature type="disulfide bond" evidence="5">
    <location>
        <begin position="564"/>
        <end position="569"/>
    </location>
</feature>
<feature type="disulfide bond" evidence="5">
    <location>
        <begin position="581"/>
        <end position="585"/>
    </location>
</feature>
<feature type="disulfide bond" evidence="5">
    <location>
        <begin position="597"/>
        <end position="620"/>
    </location>
</feature>
<feature type="disulfide bond" evidence="5">
    <location>
        <begin position="607"/>
        <end position="644"/>
    </location>
</feature>
<feature type="disulfide bond" evidence="5">
    <location>
        <begin position="652"/>
        <end position="677"/>
    </location>
</feature>
<feature type="sequence variant" description="In infectious clone pHCV-1/SF.">
    <original>KKN</original>
    <variation>RKT</variation>
    <location>
        <begin position="9"/>
        <end position="11"/>
    </location>
</feature>
<feature type="sequence variant" description="In strain: Isolate infectious clone pHCV-1/SF.">
    <original>F</original>
    <variation>S</variation>
    <location>
        <position position="399"/>
    </location>
</feature>
<feature type="sequence variant" description="In strain: Isolate infectious clone pHCV-1/SF.">
    <original>L</original>
    <variation>F</variation>
    <location>
        <position position="402"/>
    </location>
</feature>
<feature type="sequence variant" description="In strain: Isolate infectious clone pHCV-1/SF.">
    <original>I</original>
    <variation>A</variation>
    <location>
        <position position="929"/>
    </location>
</feature>
<feature type="sequence variant" description="In strain: Isolate infectious clone pHCV-1/SF.">
    <original>R</original>
    <variation>Q</variation>
    <location>
        <position position="1703"/>
    </location>
</feature>
<feature type="sequence variant" description="In strain: Isolate infectious clone pHCV-1/SF.">
    <original>V</original>
    <variation>G</variation>
    <location>
        <position position="2021"/>
    </location>
</feature>
<feature type="sequence variant" description="In strain: Isolate infectious clone pHCV-1/SF.">
    <original>TR</original>
    <variation>IK</variation>
    <location>
        <begin position="2349"/>
        <end position="2350"/>
    </location>
</feature>
<feature type="sequence variant" description="In strain: Isolate infectious clone pHCV-1/SF.">
    <original>P</original>
    <variation>R</variation>
    <location>
        <position position="2378"/>
    </location>
</feature>
<feature type="sequence variant" description="In strain: Isolate infectious clone pHCV-1/SF.">
    <original>N</original>
    <variation>S</variation>
    <location>
        <position position="2413"/>
    </location>
</feature>
<feature type="sequence variant" description="In strain: Isolate infectious clone pHCV-1/SF.">
    <original>I</original>
    <variation>F</variation>
    <location>
        <position position="2992"/>
    </location>
</feature>
<feature type="mutagenesis site" description="No effect on binding to Src-family kinases." evidence="22">
    <original>PQLP</original>
    <variation>AQLA</variation>
    <location>
        <begin position="2001"/>
        <end position="2004"/>
    </location>
</feature>
<feature type="mutagenesis site" description="No effect on binding to Src-family kinases." evidence="22">
    <original>PLPP</original>
    <variation>ALAA</variation>
    <location>
        <begin position="2315"/>
        <end position="2318"/>
    </location>
</feature>
<feature type="mutagenesis site" description="Complete loss of binding to GRB2 and Src-family kinases." evidence="22">
    <original>PPVPP</original>
    <variation>APVAA</variation>
    <location>
        <begin position="2322"/>
        <end position="2326"/>
    </location>
</feature>
<feature type="strand" evidence="38">
    <location>
        <begin position="1019"/>
        <end position="1025"/>
    </location>
</feature>
<feature type="strand" evidence="38">
    <location>
        <begin position="1027"/>
        <end position="1030"/>
    </location>
</feature>
<feature type="strand" evidence="40">
    <location>
        <begin position="1032"/>
        <end position="1035"/>
    </location>
</feature>
<feature type="helix" evidence="40">
    <location>
        <begin position="1039"/>
        <end position="1048"/>
    </location>
</feature>
<feature type="strand" evidence="40">
    <location>
        <begin position="1057"/>
        <end position="1063"/>
    </location>
</feature>
<feature type="strand" evidence="40">
    <location>
        <begin position="1068"/>
        <end position="1074"/>
    </location>
</feature>
<feature type="strand" evidence="40">
    <location>
        <begin position="1077"/>
        <end position="1081"/>
    </location>
</feature>
<feature type="helix" evidence="40">
    <location>
        <begin position="1082"/>
        <end position="1085"/>
    </location>
</feature>
<feature type="strand" evidence="35">
    <location>
        <begin position="1090"/>
        <end position="1092"/>
    </location>
</feature>
<feature type="strand" evidence="35">
    <location>
        <begin position="1095"/>
        <end position="1097"/>
    </location>
</feature>
<feature type="strand" evidence="40">
    <location>
        <begin position="1100"/>
        <end position="1103"/>
    </location>
</feature>
<feature type="helix" evidence="40">
    <location>
        <begin position="1104"/>
        <end position="1106"/>
    </location>
</feature>
<feature type="strand" evidence="40">
    <location>
        <begin position="1108"/>
        <end position="1112"/>
    </location>
</feature>
<feature type="strand" evidence="40">
    <location>
        <begin position="1129"/>
        <end position="1133"/>
    </location>
</feature>
<feature type="strand" evidence="40">
    <location>
        <begin position="1139"/>
        <end position="1144"/>
    </location>
</feature>
<feature type="strand" evidence="40">
    <location>
        <begin position="1146"/>
        <end position="1157"/>
    </location>
</feature>
<feature type="helix" evidence="40">
    <location>
        <begin position="1158"/>
        <end position="1160"/>
    </location>
</feature>
<feature type="turn" evidence="40">
    <location>
        <begin position="1161"/>
        <end position="1163"/>
    </location>
</feature>
<feature type="strand" evidence="40">
    <location>
        <begin position="1168"/>
        <end position="1170"/>
    </location>
</feature>
<feature type="turn" evidence="34">
    <location>
        <begin position="1172"/>
        <end position="1174"/>
    </location>
</feature>
<feature type="strand" evidence="40">
    <location>
        <begin position="1176"/>
        <end position="1186"/>
    </location>
</feature>
<feature type="strand" evidence="40">
    <location>
        <begin position="1189"/>
        <end position="1197"/>
    </location>
</feature>
<feature type="helix" evidence="40">
    <location>
        <begin position="1198"/>
        <end position="1204"/>
    </location>
</feature>
<feature type="strand" evidence="35">
    <location>
        <begin position="1680"/>
        <end position="1689"/>
    </location>
</feature>
<feature type="strand" evidence="36">
    <location>
        <begin position="2422"/>
        <end position="2426"/>
    </location>
</feature>
<feature type="helix" evidence="36">
    <location>
        <begin position="2445"/>
        <end position="2450"/>
    </location>
</feature>
<feature type="helix" evidence="36">
    <location>
        <begin position="2454"/>
        <end position="2456"/>
    </location>
</feature>
<feature type="strand" evidence="36">
    <location>
        <begin position="2457"/>
        <end position="2459"/>
    </location>
</feature>
<feature type="helix" evidence="36">
    <location>
        <begin position="2462"/>
        <end position="2464"/>
    </location>
</feature>
<feature type="helix" evidence="36">
    <location>
        <begin position="2465"/>
        <end position="2472"/>
    </location>
</feature>
<feature type="helix" evidence="36">
    <location>
        <begin position="2482"/>
        <end position="2495"/>
    </location>
</feature>
<feature type="helix" evidence="36">
    <location>
        <begin position="2505"/>
        <end position="2510"/>
    </location>
</feature>
<feature type="strand" evidence="39">
    <location>
        <begin position="2520"/>
        <end position="2522"/>
    </location>
</feature>
<feature type="helix" evidence="36">
    <location>
        <begin position="2525"/>
        <end position="2529"/>
    </location>
</feature>
<feature type="helix" evidence="36">
    <location>
        <begin position="2533"/>
        <end position="2548"/>
    </location>
</feature>
<feature type="strand" evidence="36">
    <location>
        <begin position="2550"/>
        <end position="2552"/>
    </location>
</feature>
<feature type="strand" evidence="36">
    <location>
        <begin position="2556"/>
        <end position="2560"/>
    </location>
</feature>
<feature type="strand" evidence="36">
    <location>
        <begin position="2564"/>
        <end position="2566"/>
    </location>
</feature>
<feature type="helix" evidence="39">
    <location>
        <begin position="2569"/>
        <end position="2571"/>
    </location>
</feature>
<feature type="strand" evidence="36">
    <location>
        <begin position="2579"/>
        <end position="2582"/>
    </location>
</feature>
<feature type="helix" evidence="36">
    <location>
        <begin position="2585"/>
        <end position="2607"/>
    </location>
</feature>
<feature type="helix" evidence="36">
    <location>
        <begin position="2608"/>
        <end position="2610"/>
    </location>
</feature>
<feature type="helix" evidence="36">
    <location>
        <begin position="2612"/>
        <end position="2614"/>
    </location>
</feature>
<feature type="helix" evidence="36">
    <location>
        <begin position="2617"/>
        <end position="2630"/>
    </location>
</feature>
<feature type="strand" evidence="36">
    <location>
        <begin position="2631"/>
        <end position="2639"/>
    </location>
</feature>
<feature type="helix" evidence="36">
    <location>
        <begin position="2644"/>
        <end position="2647"/>
    </location>
</feature>
<feature type="helix" evidence="36">
    <location>
        <begin position="2650"/>
        <end position="2660"/>
    </location>
</feature>
<feature type="helix" evidence="36">
    <location>
        <begin position="2667"/>
        <end position="2679"/>
    </location>
</feature>
<feature type="turn" evidence="36">
    <location>
        <begin position="2680"/>
        <end position="2682"/>
    </location>
</feature>
<feature type="strand" evidence="36">
    <location>
        <begin position="2684"/>
        <end position="2687"/>
    </location>
</feature>
<feature type="strand" evidence="36">
    <location>
        <begin position="2693"/>
        <end position="2697"/>
    </location>
</feature>
<feature type="helix" evidence="36">
    <location>
        <begin position="2707"/>
        <end position="2725"/>
    </location>
</feature>
<feature type="strand" evidence="36">
    <location>
        <begin position="2729"/>
        <end position="2736"/>
    </location>
</feature>
<feature type="strand" evidence="36">
    <location>
        <begin position="2739"/>
        <end position="2745"/>
    </location>
</feature>
<feature type="helix" evidence="36">
    <location>
        <begin position="2749"/>
        <end position="2765"/>
    </location>
</feature>
<feature type="strand" evidence="36">
    <location>
        <begin position="2770"/>
        <end position="2772"/>
    </location>
</feature>
<feature type="strand" evidence="36">
    <location>
        <begin position="2777"/>
        <end position="2779"/>
    </location>
</feature>
<feature type="helix" evidence="36">
    <location>
        <begin position="2780"/>
        <end position="2782"/>
    </location>
</feature>
<feature type="strand" evidence="36">
    <location>
        <begin position="2788"/>
        <end position="2794"/>
    </location>
</feature>
<feature type="strand" evidence="36">
    <location>
        <begin position="2800"/>
        <end position="2806"/>
    </location>
</feature>
<feature type="helix" evidence="36">
    <location>
        <begin position="2809"/>
        <end position="2820"/>
    </location>
</feature>
<feature type="helix" evidence="36">
    <location>
        <begin position="2827"/>
        <end position="2835"/>
    </location>
</feature>
<feature type="helix" evidence="36">
    <location>
        <begin position="2839"/>
        <end position="2843"/>
    </location>
</feature>
<feature type="helix" evidence="36">
    <location>
        <begin position="2845"/>
        <end position="2855"/>
    </location>
</feature>
<feature type="strand" evidence="36">
    <location>
        <begin position="2863"/>
        <end position="2867"/>
    </location>
</feature>
<feature type="strand" evidence="36">
    <location>
        <begin position="2870"/>
        <end position="2874"/>
    </location>
</feature>
<feature type="helix" evidence="36">
    <location>
        <begin position="2876"/>
        <end position="2878"/>
    </location>
</feature>
<feature type="helix" evidence="36">
    <location>
        <begin position="2879"/>
        <end position="2887"/>
    </location>
</feature>
<feature type="helix" evidence="36">
    <location>
        <begin position="2889"/>
        <end position="2892"/>
    </location>
</feature>
<feature type="helix" evidence="36">
    <location>
        <begin position="2899"/>
        <end position="2912"/>
    </location>
</feature>
<feature type="helix" evidence="36">
    <location>
        <begin position="2917"/>
        <end position="2933"/>
    </location>
</feature>
<feature type="helix" evidence="36">
    <location>
        <begin position="2936"/>
        <end position="2945"/>
    </location>
</feature>
<feature type="helix" evidence="36">
    <location>
        <begin position="2947"/>
        <end position="2949"/>
    </location>
</feature>
<feature type="helix" evidence="36">
    <location>
        <begin position="2960"/>
        <end position="2964"/>
    </location>
</feature>
<feature type="turn" evidence="36">
    <location>
        <begin position="2968"/>
        <end position="2971"/>
    </location>
</feature>
<feature type="strand" evidence="37">
    <location>
        <begin position="2972"/>
        <end position="2975"/>
    </location>
</feature>
<comment type="function">
    <molecule>Mature core protein</molecule>
    <text evidence="3 5 6 11 26 28 30 31 32">Packages viral RNA to form a viral nucleocapsid, and promotes virion budding (Probable). Participates in the viral particle production as a result of its interaction with the non-structural protein 5A (By similarity). Binds RNA and may function as a RNA chaperone to induce the RNA structural rearrangements taking place during virus replication (By similarity). Modulates viral translation initiation by interacting with viral IRES and 40S ribosomal subunit (By similarity). Affects various cell signaling pathways, host immunity and lipid metabolism (Probable). Prevents the establishment of cellular antiviral state by blocking the interferon-alpha/beta (IFN-alpha/beta) and IFN-gamma signaling pathways and by blocking the formation of phosphorylated STAT1 and promoting ubiquitin-mediated proteasome-dependent degradation of STAT1 (By similarity). Activates STAT3 leading to cellular transformation (By similarity). Regulates the activity of cellular genes, including c-myc and c-fos (PubMed:8533458). May repress the promoter of p53, and sequester CREB3 and SP110 isoform 3/Sp110b in the cytoplasm (PubMed:9110985). Represses cell cycle negative regulating factor CDKN1A, thereby interrupting an important check point of normal cell cycle regulation (PubMed:9524287). Targets transcription factors involved in the regulation of inflammatory responses and in the immune response: suppresses TNF-induced NF-kappa-B activation, and activates AP-1 (PubMed:9811706). Binds to dendritic cells (DCs) via C1QR1, resulting in down-regulation of T-lymphocytes proliferation (By similarity). Alters lipid metabolism by interacting with hepatocellular proteins involved in lipid accumulation and storage (By similarity). Induces up-regulation of FAS promoter activity, and thereby contributes to the increased triglyceride accumulation in hepatocytes (steatosis) (By similarity).</text>
</comment>
<comment type="function">
    <molecule>Envelope glycoprotein E1</molecule>
    <text evidence="5">Forms a heterodimer with envelope glycoprotein E2, which mediates virus attachment to the host cell, virion internalization through clathrin-dependent endocytosis and fusion with host membrane (By similarity). Fusion with the host cell is most likely mediated by both E1 and E2, through conformational rearrangements of the heterodimer required for fusion rather than a classical class II fusion mechanism (By similarity). E1/E2 heterodimer binds host apolipoproteins such as APOB and APOE thereby forming a lipo-viro-particle (LVP) (By similarity). APOE associated to the LVP allows the initial virus attachment to cell surface receptors such as the heparan sulfate proteoglycans (HSPGs), syndecan-1 (SDC1), syndecan-1 (SDC2), the low-density lipoprotein receptor (LDLR) and scavenger receptor class B type I (SCARB1) (By similarity). The cholesterol transfer activity of SCARB1 allows E2 exposure and binding of E2 to SCARB1 and the tetraspanin CD81 (By similarity). E1/E2 heterodimer binding on CD81 activates the epithelial growth factor receptor (EGFR) signaling pathway (By similarity). Diffusion of the complex E1-E2-EGFR-SCARB1-CD81 to the cell lateral membrane allows further interaction with Claudin 1 (CLDN1) and occludin (OCLN) to finally trigger HCV entry (By similarity).</text>
</comment>
<comment type="function">
    <molecule>Envelope glycoprotein E2</molecule>
    <text evidence="5 19 20">Forms a heterodimer with envelope glycoprotein E1, which mediates virus attachment to the host cell, virion internalization through clathrin-dependent endocytosis and fusion with host membrane (By similarity). Fusion with the host cell is most likely mediated by both E1 and E2, through conformational rearrangements of the heterodimer required for fusion rather than a classical class II fusion mechanism (By similarity). The interaction between envelope glycoprotein E2 and host apolipoprotein E/APOE allows the proper assembly, maturation and infectivity of the viral particles (By similarity). This interaction is probably promoted via the up-regulation of cellular autophagy by the virus (By similarity). E1/E2 heterodimer binds host apolipoproteins such as APOB and APOE thereby forming a lipo-viro-particle (LVP) (By similarity). APOE associated to the LVP allows the initial virus attachment to cell surface receptors such as the heparan sulfate proteoglycans (HSPGs), syndecan-1 (SDC1), syndecan-1 (SDC2), the low-density lipoprotein receptor (LDLR) and scavenger receptor class B type I (SCARB1) (By similarity). The cholesterol transfer activity of SCARB1 allows E2 exposure and binding of E2 to SCARB1 and the tetraspanin CD81 (By similarity). E1/E2 heterodimer binding on CD81 activates the epithelial growth factor receptor (EGFR) signaling pathway (By similarity). Diffusion of the complex E1-E2-EGFR-SCARB1-CD81 to the cell lateral membrane allows further interaction with Claudin 1 (CLDN1) and occludin (OCLN) to finally trigger HCV entry (By similarity). Inhibits host EIF2AK2/PKR activation, preventing the establishment of an antiviral state (PubMed:10390359, PubMed:11152499). Viral ligand for CD209/DC-SIGN and CLEC4M/DC-SIGNR, which are respectively found on dendritic cells (DCs), and on liver sinusoidal endothelial cells and macrophage-like cells of lymph node sinuses (By similarity). These interactions allow the capture of circulating HCV particles by these cells and subsequent facilitated transmission to permissive cells such as hepatocytes and lymphocyte subpopulations (By similarity). The interaction between E2 and host amino acid transporter complex formed by SLC3A2 and SLC7A5/LAT1 may facilitate viral entry into host cell (By similarity).</text>
</comment>
<comment type="function">
    <molecule>Viroporin p7</molecule>
    <text evidence="3 5 11 32">Ion channel protein that acts as a viroporin and plays an essential role in the assembly, envelopment and secretion of viral particles (By similarity). Regulates the host cell secretory pathway, which induces the intracellular retention of viral glycoproteins and favors assembly of viral particles (By similarity). Creates a pore in acidic organelles and releases Ca(2+) and H(+) in the cytoplasm of infected cells, leading to a productive viral infection (By similarity). High levels of cytoplasmic Ca(2+) may trigger membrane trafficking and transport of viral ER-associated proteins to viroplasms, sites of viral genome replication (Probable). This ionic imbalance induces the assembly of the inflammasome complex, which triggers the maturation of pro-IL-1beta into IL-1beta through the action of caspase-1 (By similarity). Targets also host mitochondria and induces mitochondrial depolarization (By similarity). In addition of its role as a viroporin, acts as a lipid raft adhesion factor (By similarity).</text>
</comment>
<comment type="function">
    <molecule>Protease NS2</molecule>
    <text evidence="4 5 11">Cysteine protease required for the proteolytic auto-cleavage between the non-structural proteins NS2 and NS3 (By similarity). The N-terminus of NS3 is required for the function of NS2 protease (active region NS2-3) (By similarity). Promotes the initiation of viral particle assembly by mediating the interaction between structural and non-structural proteins (By similarity).</text>
</comment>
<comment type="function">
    <molecule>Serine protease/helicase NS3</molecule>
    <text evidence="5 12">Displays three enzymatic activities: serine protease with a chymotrypsin-like fold, NTPase and RNA helicase (By similarity). NS3 serine protease, in association with NS4A, is responsible for the cleavages of NS3-NS4A, NS4A-NS4B, NS4B-NS5A and NS5A-NS5B (By similarity). The NS3/NS4A complex prevents phosphorylation of host IRF3, thus preventing the establishment of dsRNA induced antiviral state (By similarity). The NS3/NS4A complex induces host amino acid transporter component SLC3A2, thus contributing to HCV propagation (By similarity). NS3 RNA helicase binds to RNA and unwinds both dsDNA and dsRNA in the 3' to 5' direction, and likely resolves RNA complicated stable secondary structures in the template strand (By similarity). Binds a single ATP and catalyzes the unzipping of a single base pair of dsRNA (By similarity). Inhibits host antiviral proteins TBK1 and IRF3 thereby preventing the establishment of an antiviral state (By similarity). Cleaves host MAVS/CARDIF thereby preventing the establishment of an antiviral state (By similarity). Cleaves host TICAM1/TRIF, thereby disrupting TLR3 signaling and preventing the establishment of an antiviral state (By similarity).</text>
</comment>
<comment type="function">
    <molecule>Non-structural protein 4A</molecule>
    <text evidence="5 12">The NS3/NS4A complex prevents phosphorylation of host IRF3, thus preventing the establishment of dsRNA induced antiviral state (By similarity). The NS3/NS4A complex induces host amino acid transporter component SLC3A2, thus contributing to HCV propagation (By similarity).</text>
</comment>
<comment type="function">
    <molecule>Non-structural protein 4B</molecule>
    <text evidence="5">Induces a specific membrane alteration that serves as a scaffold for the virus replication complex (By similarity). This membrane alteration gives rise to the so-called ER-derived membranous web that contains the replication complex (By similarity). NS4B self-interaction contributes to its function in membranous web formation (By similarity). Promotes host TRIF protein degradation in a CASP8-dependent manner thereby inhibiting host TLR3-mediated interferon signaling (By similarity). Disrupts the interaction between STING and TBK1 contributing to the inhibition of interferon signaling (By similarity).</text>
</comment>
<comment type="function">
    <molecule>Non-structural protein 5A</molecule>
    <text evidence="3 5 11 12 24 29">Phosphorylated protein that is indispensable for viral replication and assembly (By similarity). Both hypo- and hyperphosphorylated states are required for the viral life cycle (By similarity). The hyperphosphorylated form of NS5A is an inhibitor of viral replication (By similarity). Involved in RNA-binding and especially in binding to the viral genome (By similarity). Zinc is essential for RNA-binding (By similarity). Participates in the viral particle production as a result of its interaction with the mature viral core protein (By similarity). Its interaction with host VAPB may target the viral replication complex to vesicles (By similarity). Down-regulates viral IRES translation initiation (PubMed:15784895). Mediates interferon resistance, presumably by interacting with and inhibiting host EIF2AK2/PKR (PubMed:9143277). Prevents BIN1-induced apoptosis (By similarity). Acts as a transcriptional activator of some host genes important for viral replication when localized in the nucleus (By similarity). Via the interaction with host PACSIN2, modulates lipid droplet formation in order to promote virion assembly (By similarity). Modulates TNFRSF21/DR6 signaling pathway for viral propagation (By similarity).</text>
</comment>
<comment type="function">
    <molecule>RNA-directed RNA polymerase</molecule>
    <text evidence="5">RNA-dependent RNA polymerase that performs primer-template recognition and RNA synthesis during viral replication. Initiates RNA transcription/replication at a flavin adenine dinucleotide (FAD), resulting in a 5'- FAD cap on viral RNAs. In this way, recognition of viral 5' RNA by host pattern recognition receptors can be bypassed, thereby evading activation of antiviral pathways.</text>
</comment>
<comment type="catalytic activity">
    <molecule>Serine protease/helicase NS3</molecule>
    <reaction evidence="5">
        <text>Hydrolysis of four peptide bonds in the viral precursor polyprotein, commonly with Asp or Glu in the P6 position, Cys or Thr in P1 and Ser or Ala in P1'.</text>
        <dbReference type="EC" id="3.4.21.98"/>
    </reaction>
</comment>
<comment type="catalytic activity">
    <molecule>Serine protease/helicase NS3</molecule>
    <reaction evidence="5">
        <text>a ribonucleoside 5'-triphosphate + H2O = a ribonucleoside 5'-diphosphate + phosphate + H(+)</text>
        <dbReference type="Rhea" id="RHEA:23680"/>
        <dbReference type="ChEBI" id="CHEBI:15377"/>
        <dbReference type="ChEBI" id="CHEBI:15378"/>
        <dbReference type="ChEBI" id="CHEBI:43474"/>
        <dbReference type="ChEBI" id="CHEBI:57930"/>
        <dbReference type="ChEBI" id="CHEBI:61557"/>
        <dbReference type="EC" id="3.6.1.15"/>
    </reaction>
</comment>
<comment type="catalytic activity">
    <molecule>Serine protease/helicase NS3</molecule>
    <reaction evidence="5">
        <text>ATP + H2O = ADP + phosphate + H(+)</text>
        <dbReference type="Rhea" id="RHEA:13065"/>
        <dbReference type="ChEBI" id="CHEBI:15377"/>
        <dbReference type="ChEBI" id="CHEBI:15378"/>
        <dbReference type="ChEBI" id="CHEBI:30616"/>
        <dbReference type="ChEBI" id="CHEBI:43474"/>
        <dbReference type="ChEBI" id="CHEBI:456216"/>
        <dbReference type="EC" id="3.6.4.13"/>
    </reaction>
</comment>
<comment type="catalytic activity">
    <molecule>RNA-directed RNA polymerase</molecule>
    <reaction evidence="14">
        <text>RNA(n) + a ribonucleoside 5'-triphosphate = RNA(n+1) + diphosphate</text>
        <dbReference type="Rhea" id="RHEA:21248"/>
        <dbReference type="Rhea" id="RHEA-COMP:14527"/>
        <dbReference type="Rhea" id="RHEA-COMP:17342"/>
        <dbReference type="ChEBI" id="CHEBI:33019"/>
        <dbReference type="ChEBI" id="CHEBI:61557"/>
        <dbReference type="ChEBI" id="CHEBI:140395"/>
        <dbReference type="EC" id="2.7.7.48"/>
    </reaction>
</comment>
<comment type="cofactor">
    <molecule>Protease NS2</molecule>
    <cofactor evidence="4">
        <name>Zn(2+)</name>
        <dbReference type="ChEBI" id="CHEBI:29105"/>
    </cofactor>
    <text evidence="4">Activity of protease NS2 is dependent on zinc ions and completely inhibited by EDTA. This is probably due to the fact that NS2 protease activity needs NS3 N-terminus that binds a zinc atom (active region NS2-3).</text>
</comment>
<comment type="cofactor">
    <molecule>Serine protease/helicase NS3</molecule>
    <cofactor evidence="4">
        <name>Zn(2+)</name>
        <dbReference type="ChEBI" id="CHEBI:29105"/>
    </cofactor>
    <cofactor evidence="12">
        <name>Mg(2+)</name>
        <dbReference type="ChEBI" id="CHEBI:18420"/>
    </cofactor>
    <text evidence="4 12">Binds 1 zinc ion, which has a structural role (By similarity). The magnesium ion is essential for the helicase activity (By similarity).</text>
</comment>
<comment type="cofactor">
    <molecule>RNA-directed RNA polymerase</molecule>
    <cofactor evidence="4">
        <name>Mg(2+)</name>
        <dbReference type="ChEBI" id="CHEBI:18420"/>
    </cofactor>
    <text evidence="4">Binds 2 magnesium ion that constitute a dinuclear catalytic metal center.</text>
</comment>
<comment type="activity regulation">
    <text evidence="3 5">Inhibited by the antiviral drug hexamethylene amiloride (By similarity). Inhibition by amantadine appears to be genotype-dependent (By similarity). Also inhibited by long-alkyl-chain iminosugar derivatives (By similarity).</text>
</comment>
<comment type="activity regulation">
    <molecule>RNA-directed RNA polymerase</molecule>
    <text evidence="5">Activity is up-regulated by PRK2/PKN2-mediated phosphorylation.</text>
</comment>
<comment type="subunit">
    <molecule>Mature core protein</molecule>
    <text evidence="3 5 6 8 9 11 27">Homooligomer (By similarity). Interacts with E1 (via C-terminus) (PubMed:8764026). Interacts with the non-structural protein 5A (By similarity). Interacts (via N-terminus) with host STAT1 (via SH2 domain); this interaction results in decreased STAT1 phosphorylation and ubiquitin-mediated proteasome-dependent STAT1 degradation, leading to decreased IFN-stimulated gene transcription (By similarity). Interacts with host STAT3; this interaction constitutively activates STAT3 (By similarity). Interacts with host LTBR receptor (By similarity). Interacts with host TNFRSF1A receptor and possibly induces apoptosis (By similarity). Interacts with host HNRPK (By similarity). Interacts with host YWHAE (By similarity). Interacts with host UBE3A/E6AP (By similarity). Interacts with host DDX3X (By similarity). Interacts with host APOA2 (By similarity). Interacts with host RXRA protein (By similarity). Interacts with host SP110 isoform 3/Sp110b; this interaction sequesters the transcriptional corepressor SP110 away from the nucleus (By similarity). Interacts with host CREB3 nuclear transcription protein; this interaction triggers cell transformation (By similarity). Interacts with host ACY3 (By similarity). Interacts with host C1QR1 (By similarity). Interacts with host RBM24; this interaction, which enhances the interaction of the mature core protein with 5'-UTR, may inhibit viral translation and favor replication (By similarity). Interacts with host EIF2AK2/PKR; this interaction induces the autophosphorylation of EIF2AK2 (By similarity). Part of the viral assembly initiation complex composed of NS2, E1, E2, NS3, NS4A, NS5A and the mature core protein (By similarity).</text>
</comment>
<comment type="subunit">
    <molecule>Envelope glycoprotein E1</molecule>
    <text evidence="5 11 27">Forms a heterodimer with envelope glycoprotein E2 (By similarity). Interacts with mature core protein (PubMed:8764026). Interacts with protease NS2 (By similarity). The heterodimer E1/E2 interacts with host CLDN1; this interaction plays a role in viral entry into host cell (By similarity). Interacts with host SPSB2 (via C-terminus) (By similarity). Part of the viral assembly initiation complex composed of NS2, E1, E2, NS3, NS4A, NS5A and the mature core protein (By similarity). Interacts with host NEURL3; this interaction prevents E1 binding to glycoprotein E2 (By similarity).</text>
</comment>
<comment type="subunit">
    <molecule>Envelope glycoprotein E2</molecule>
    <text evidence="5 11 12 29">Forms a heterodimer with envelope glycoprotein E1 (By similarity). Interacts with host CD81 and SCARB1 receptors; these interactions play a role in viral entry into host cell (By similarity). Interacts with host EIF2AK2/PKR; this interaction inhibits EIF2AK2 and probably allows the virus to evade the innate immune response (PubMed:9143277). Interacts with host CD209/DC-SIGN and CLEC4M/DC-SIGNR (By similarity). Interact with host SPCS1; this interaction is essential for viral particle assembly (By similarity). Interacts with protease NS2 (By similarity). The heterodimer E1/E2 interacts with host CLDN1; this interaction plays a role in viral entry into host cell (By similarity). Part of the viral assembly initiation complex composed of NS2, E1, E2, NS3, NS4A, NS5A and the mature core protein (By similarity). Interacts with host SLC3A2/4F2hc; the interaction may facilitate viral entry into host cell (By similarity). Interacts with human PLSCR1 (By similarity).</text>
</comment>
<comment type="subunit">
    <molecule>Viroporin p7</molecule>
    <text evidence="2 5 11">Homohexamer (By similarity). Homoheptamer (By similarity). Interacts with protease NS2 (By similarity).</text>
</comment>
<comment type="subunit">
    <molecule>Protease NS2</molecule>
    <text evidence="5 11">Homodimer (By similarity). Interacts with host SPCS1; this interaction is essential for viral particle assembly (By similarity). Interacts with envelope glycoprotein E1 (By similarity). Interacts with envelope glycoprotein E2 (By similarity). Interacts with viroporin p7 (By similarity). Interacts with serine protease/helicase NS3 (By similarity). Part of the replication complex composed of NS2, NS3, NS4A, NS4B, NS5A and the RNA-directed RNA polymerase embedded in an ER-derived membranous web (By similarity). Part of the viral assembly initiation complex composed of NS2, E1, E2, NS3, NS4A, NS5A and the mature core protein (By similarity).</text>
</comment>
<comment type="subunit">
    <molecule>Serine protease/helicase NS3</molecule>
    <text evidence="4 5 11 12">Interacts with protease NS2 (By similarity). Interacts with non-structural protein 4A; this interaction stabilizes the folding of NS3 serine protease (By similarity). NS3-NS4A interaction is essential for NS3 activation and allows membrane anchorage of the latter (By similarity). NS3/NS4A complex also prevents phosphorylation of host IRF3, thus preventing the establishment of dsRNA induced antiviral state (By similarity). Interacts with host MAVS; this interaction leads to the cleavage and inhibition of host MAVS (By similarity). Interacts with host TICAM1; this interaction leads to the cleavage and inhibition of host TICAM1 (By similarity). Interacts with host TANK-binding kinase/TBK1; this interaction results in the inhibition of the association between TBK1 and IRF3, which leads to the inhibition of IRF3 activation (By similarity). Interacts with host RBM24 (By similarity). Part of the replication complex composed of NS2, NS3, NS4A, NS4B, NS5A and the RNA-directed RNA polymerase embedded in an ER-derived membranous web (By similarity). Part of the viral assembly initiation complex composed of NS2, E1, E2, NS3, NS4A, NS5A and the mature core protein (By similarity).</text>
</comment>
<comment type="subunit">
    <molecule>Non-structural protein 4A</molecule>
    <text evidence="3 4 5 11">Interacts with NS3 serine protease; this interaction stabilizes the folding of NS3 serine protease (By similarity). NS3-NS4A interaction is essential for NS3 activation and allows membrane anchorage of the latter (By similarity). Interacts with non-structural protein 5A (via N-terminus) (By similarity). Part of the replication complex composed of NS2, NS3, NS4A, NS4B, NS5A and the RNA-directed RNA polymerase embedded in an ER-derived membranous web (By similarity). Part of the viral assembly initiation complex composed of NS2, E1, E2, NS3, NS4A, NS5A and the mature core protein (By similarity).</text>
</comment>
<comment type="subunit">
    <molecule>Non-structural protein 4B</molecule>
    <text evidence="5 11">Homomultimer (By similarity). Interacts with non-structural protein NS5A (By similarity). Interacts with host PLA2G4C; this interaction likely initiates the recruitment of replication complexes to lipid droplets (By similarity). Interacts with host STING; this interaction disrupts the interaction between STING and TBK1 thereby suppressing the interferon signaling (By similarity). Part of the replication complex composed of NS2, NS3, NS4A, NS4B, NS5A and the RNA-directed RNA polymerase embedded in an ER-derived membranous web (By similarity).</text>
</comment>
<comment type="subunit">
    <molecule>Non-structural protein 5A</molecule>
    <text evidence="3 4 5 11 22 29">Monomer (By similarity). Homodimer; dimerization is required for RNA-binding (By similarity). Interacts with mature core protein (By similarity). Interacts (via N-terminus) with non-structural protein 4A (By similarity). Interacts with non-structural protein 4B (By similarity). Interacts with RNA-directed RNA polymerase (By similarity). Part of the viral assembly initiation complex composed of NS2, E1, E2, NS3, NS4A, NS5A and the mature core protein (By similarity). Part of the replication complex composed of NS2, NS3, NS4A, NS4B, NS5A and the RNA-directed RNA polymerase (By similarity). Interacts with host GRB2 (By similarity). Interacts with host BIN1 (By similarity). Interacts with host PIK3R1 (By similarity). Interacts with host SRCAP (By similarity). Interacts with host FKBP8 (By similarity). Interacts with host VAPB (By similarity). Interacts with host EIF2AK2/PKR; this interaction leads to disruption of EIF2AK2 dimerization by NS5A and probably allows the virus to evade the innate immune response (PubMed:9143277). Interacts (via N-terminus) with host PACSIN2 (via N-terminus); this interaction attenuates protein kinase C alpha-mediated phosphorylation of PACSIN2 by disrupting the interaction between PACSIN2 and PRKCA (By similarity). Interacts (via N-terminus) with host SRC kinase (via SH2 domain) (By similarity). Interacts with most Src-family kinases (PubMed:14993658). Interacts with host IFI27 and SKP2; promotes the ubiquitin-mediated proteasomal degradation of NS5A (By similarity). Interacts with host GPS2 (By similarity). Interacts with host TNFRSF21; this interaction allows the modulation by the virus of JNK, p38 MAPK, STAT3, and Akt signaling pathways in a DR6-dependent manner (By similarity). Interacts (via N-terminus) with host CIDEB (via N-terminus); this interaction seems to regulate the association of HCV particles with APOE (By similarity). Interacts with host CHKA/Choline Kinase-alpha; CHKA bridges host PI4KA and NS5A and potentiates NS5A-stimulated PI4KA activity, which then facilitates the targeting of the ternary complex to the ER for viral replication (By similarity). Interacts with host SPSB2 (via C-terminus); this interaction targets NS5A for ubiquitination and degradation (By similarity). Interacts with host RAB18; this interaction may promote the association of NS5A and other replicase components with lipid droplets (By similarity). Interacts with host TRIM14; this interaction induces the degradation of NS5A (By similarity).</text>
</comment>
<comment type="subunit">
    <molecule>RNA-directed RNA polymerase</molecule>
    <text evidence="5">Homooligomer (By similarity). Interacts with non-structural protein 5A (By similarity). Interacts with host VAPB (By similarity). Interacts with host PRK2/PKN2 (By similarity). Interacts with host HNRNPA1 and SEPT6; these interactions facilitate viral replication (By similarity). Part of the replication complex composed of NS2, NS3, NS4A, NS4B, NS5A and the RNA-directed RNA polymerase (By similarity). Initiates RNA transcription/replication at a flavin adenine dinucleotide (FAD), resulting in a 5'- FAD cap on viral RNAs. In this way, recognition of viral 5' RNA by host pattern recognition receptors can be bypassed, thereby evading activation of antiviral pathways.</text>
</comment>
<comment type="interaction">
    <interactant intactId="EBI-6941357">
        <id>P26664</id>
    </interactant>
    <interactant intactId="EBI-7378963">
        <id>Q91XE4</id>
        <label>Acy3</label>
    </interactant>
    <organismsDiffer>true</organismsDiffer>
    <experiments>6</experiments>
</comment>
<comment type="interaction">
    <interactant intactId="EBI-6941357">
        <id>P26664</id>
    </interactant>
    <interactant intactId="EBI-1057697">
        <id>P42224</id>
        <label>STAT1</label>
    </interactant>
    <organismsDiffer>true</organismsDiffer>
    <experiments>5</experiments>
</comment>
<comment type="interaction">
    <interactant intactId="EBI-9209740">
        <id>PRO_0000037517</id>
    </interactant>
    <interactant intactId="EBI-353779">
        <id>O00571</id>
        <label>DDX3X</label>
    </interactant>
    <organismsDiffer>true</organismsDiffer>
    <experiments>3</experiments>
</comment>
<comment type="subcellular location">
    <molecule>Core protein precursor</molecule>
    <subcellularLocation>
        <location evidence="25">Host endoplasmic reticulum membrane</location>
        <topology evidence="13">Single-pass membrane protein</topology>
    </subcellularLocation>
    <subcellularLocation>
        <location evidence="23">Host mitochondrion membrane</location>
        <topology evidence="13">Single-pass type I membrane protein</topology>
    </subcellularLocation>
    <text>The C-terminal transmembrane domain of the core protein precursor contains an ER signal leading the nascent polyprotein to the ER membrane.</text>
</comment>
<comment type="subcellular location">
    <molecule>Mature core protein</molecule>
    <subcellularLocation>
        <location evidence="11">Virion</location>
    </subcellularLocation>
    <subcellularLocation>
        <location evidence="11">Host cytoplasm</location>
    </subcellularLocation>
    <subcellularLocation>
        <location evidence="3">Host nucleus</location>
    </subcellularLocation>
    <subcellularLocation>
        <location evidence="11">Host lipid droplet</location>
    </subcellularLocation>
    <text evidence="5">Only a minor proportion of core protein is present in the nucleus (By similarity). Probably present on the surface of lipid droplets (By similarity).</text>
</comment>
<comment type="subcellular location">
    <molecule>Envelope glycoprotein E1</molecule>
    <subcellularLocation>
        <location evidence="32">Virion membrane</location>
        <topology evidence="32">Single-pass type I membrane protein</topology>
    </subcellularLocation>
    <subcellularLocation>
        <location>Host endoplasmic reticulum membrane</location>
        <topology evidence="5">Single-pass type I membrane protein</topology>
    </subcellularLocation>
    <text evidence="5">The C-terminal transmembrane domain acts as a signal sequence and forms a hairpin structure before cleavage by host signal peptidase (By similarity). After cleavage, the membrane sequence is retained at the C-terminus of the protein, serving as ER membrane anchor (By similarity). A reorientation of the second hydrophobic stretch occurs after cleavage producing a single reoriented transmembrane domain (By similarity). These events explain the final topology of the protein (By similarity).</text>
</comment>
<comment type="subcellular location">
    <molecule>Envelope glycoprotein E2</molecule>
    <subcellularLocation>
        <location evidence="32">Virion membrane</location>
        <topology evidence="32">Single-pass type I membrane protein</topology>
    </subcellularLocation>
    <subcellularLocation>
        <location>Host endoplasmic reticulum membrane</location>
        <topology evidence="5">Single-pass type I membrane protein</topology>
    </subcellularLocation>
    <subcellularLocation>
        <location evidence="12">Host lipid droplet</location>
    </subcellularLocation>
    <text evidence="5">The C-terminal transmembrane domain acts as a signal sequence and forms a hairpin structure before cleavage by host signal peptidase (By similarity). After cleavage, the membrane sequence is retained at the C-terminus of the protein, serving as ER membrane anchor (By similarity). A reorientation of the second hydrophobic stretch occurs after cleavage producing a single reoriented transmembrane domain (By similarity). These events explain the final topology of the protein (By similarity).</text>
</comment>
<comment type="subcellular location">
    <molecule>Viroporin p7</molecule>
    <subcellularLocation>
        <location evidence="11">Host endoplasmic reticulum membrane</location>
        <topology evidence="11">Multi-pass membrane protein</topology>
    </subcellularLocation>
    <subcellularLocation>
        <location evidence="5">Host mitochondrion</location>
    </subcellularLocation>
    <subcellularLocation>
        <location evidence="11">Host cell membrane</location>
    </subcellularLocation>
    <text evidence="5">The C-terminus of p7 membrane domain acts as a signal sequence (By similarity). After cleavage by host signal peptidase, the membrane sequence is retained at the C-terminus of the protein, serving as ER membrane anchor (By similarity). ER retention of p7 is leaky and a small fraction reaches the plasma membrane (By similarity).</text>
</comment>
<comment type="subcellular location">
    <molecule>Protease NS2</molecule>
    <subcellularLocation>
        <location evidence="21">Host endoplasmic reticulum membrane</location>
        <topology evidence="21">Multi-pass membrane protein</topology>
    </subcellularLocation>
    <text evidence="11">Probably present on the surface of lipid droplets.</text>
</comment>
<comment type="subcellular location">
    <molecule>Serine protease/helicase NS3</molecule>
    <subcellularLocation>
        <location evidence="1">Host endoplasmic reticulum membrane</location>
        <topology evidence="1">Peripheral membrane protein</topology>
    </subcellularLocation>
    <text evidence="32">NS3 is associated to the ER membrane through its binding to NS4A.</text>
</comment>
<comment type="subcellular location">
    <molecule>Non-structural protein 4A</molecule>
    <subcellularLocation>
        <location evidence="32">Host endoplasmic reticulum membrane</location>
        <topology evidence="32">Single-pass type I membrane protein</topology>
    </subcellularLocation>
    <text evidence="32">Host membrane insertion occurs after processing by the NS3 protease.</text>
</comment>
<comment type="subcellular location">
    <molecule>Non-structural protein 4B</molecule>
    <subcellularLocation>
        <location evidence="5">Host endoplasmic reticulum membrane</location>
        <topology evidence="5">Multi-pass membrane protein</topology>
    </subcellularLocation>
    <text evidence="5">A reorientation of the N-terminus into the ER lumen occurs post-translationally.</text>
</comment>
<comment type="subcellular location">
    <molecule>Non-structural protein 5A</molecule>
    <subcellularLocation>
        <location evidence="3">Host endoplasmic reticulum membrane</location>
        <topology evidence="5">Peripheral membrane protein</topology>
    </subcellularLocation>
    <subcellularLocation>
        <location evidence="3">Host cytoplasm</location>
        <location evidence="3">Host perinuclear region</location>
    </subcellularLocation>
    <subcellularLocation>
        <location evidence="3">Host mitochondrion</location>
    </subcellularLocation>
    <subcellularLocation>
        <location evidence="5">Host cytoplasm</location>
    </subcellularLocation>
    <subcellularLocation>
        <location evidence="3">Host nucleus</location>
    </subcellularLocation>
    <subcellularLocation>
        <location evidence="3">Host lipid droplet</location>
    </subcellularLocation>
    <text evidence="3 5">Host membrane insertion occurs after processing by the NS3 protease (By similarity). Localizes at the surface of lipid droplets (By similarity).</text>
</comment>
<comment type="subcellular location">
    <molecule>RNA-directed RNA polymerase</molecule>
    <subcellularLocation>
        <location evidence="5">Host cytoplasm</location>
    </subcellularLocation>
    <subcellularLocation>
        <location evidence="5">Host endoplasmic reticulum membrane</location>
        <topology evidence="32">Single-pass type I membrane protein</topology>
    </subcellularLocation>
    <text evidence="5">Host membrane insertion occurs after processing by the NS3 protease.</text>
</comment>
<comment type="alternative products">
    <event type="ribosomal frameshifting"/>
    <isoform>
        <id>P26664-1</id>
        <name>Genome polyprotein</name>
        <sequence type="displayed"/>
    </isoform>
    <isoform>
        <id>P0C044-1</id>
        <name>F protein</name>
        <name>Frameshifted protein</name>
        <sequence type="external"/>
    </isoform>
    <text evidence="5">The exact location of the ribosomal frameshift is unknown. The F protein seems to be generated by a -2 ribosomal frameshift located in the vicinity of codon 11 of the core protein coding sequence. However, some F proteins may also be generated by +1 ribosomal frameshift. Since the core gene encodes alternative reading frame proteins (ARFPs), many functions depicted for the core protein might belong to the ARFPs.</text>
</comment>
<comment type="domain">
    <molecule>Envelope glycoprotein E1</molecule>
    <text evidence="5">The transmembrane regions of envelope E1 and E2 glycoproteins are involved in heterodimer formation, ER localization, and assembly of these proteins.</text>
</comment>
<comment type="domain">
    <molecule>Envelope glycoprotein E2</molecule>
    <text evidence="4 5">The transmembrane regions of envelope E1 and E2 glycoproteins are involved in heterodimer formation, ER localization, and assembly of these proteins (By similarity). Envelope E2 glycoprotein contain two highly variable regions called hypervariable region 1 and 2 (HVR1 and HVR2) (By similarity). E2 also contain two segments involved in CD81-binding (By similarity). HVR1 is implicated in the SCARB1-mediated cell entry and probably acts as a regulator of the association of particles with lipids (By similarity).</text>
</comment>
<comment type="domain">
    <molecule>Protease NS2</molecule>
    <text evidence="4">The N-terminus of NS3 is required for the catalytic activity of protease NS2 (By similarity). The minimal catalytic region includes the C-terminus of NS2 and the N-terminus NS3 protease domain (active region NS2-3) (By similarity).</text>
</comment>
<comment type="domain">
    <molecule>Serine protease/helicase NS3</molecule>
    <text evidence="3 5">The N-terminal one-third of serine protease/helicase NS3 contains the protease activity (By similarity). This region contains a zinc atom that does not belong to the active site, but may play a structural rather than a catalytic role (By similarity). This region is essential for the activity of protease NS2, maybe by contributing to the folding of the latter (By similarity). The NTPase/helicase activity is located in the twothirds C-terminus of NS3, this domain contains the NTPase and RNA-binding regions (By similarity).</text>
</comment>
<comment type="domain">
    <molecule>Non-structural protein 4B</molecule>
    <text evidence="11">Contains a glycine zipper region that critically contributes to the biogenesis of functional ER-derived replication organelles.</text>
</comment>
<comment type="domain">
    <molecule>Non-structural protein 5A</molecule>
    <text evidence="3 5">The N-terminus of NS5A acts as membrane anchor (By similarity). The central part of NS5A contains a variable region called interferon sensitivity determining region (ISDR) and seems to be intrinsically disordered and interacts with NS5B and host EIF2AK2 (By similarity). The C-terminus of NS5A contains a variable region called variable region 3 (V3) (By similarity). ISDR and V3 may be involved in sensitivity and/or resistance to IFN-alpha therapy (By similarity). The C-terminus contains a nuclear localization signal (By similarity). The SH3-binding domain is involved in the interaction with host BIN1, GRB2 and Src-family kinases (By similarity).</text>
</comment>
<comment type="PTM">
    <molecule>Isoform Genome polyprotein</molecule>
    <text evidence="4 5 11 25">Specific enzymatic cleavages in vivo yield mature proteins (By similarity). The structural proteins, core, E1, E2 and p7 are produced by proteolytic processing by host signal peptidases (By similarity). The core protein precursor is synthesized as a 23 kDa protein which is retained in the ER membrane through the hydrophobic signal peptide (PubMed:7491770). Cleavage by the signal peptidase releases the 21 kDa mature core protein (PubMed:7491770). The cleavage of the core protein precursor occurs between aminoacids 176 and 188 but the exact cleavage site is not known (By similarity). Some degraded forms of the core protein appear as well during the course of infection (By similarity). The other proteins (p7, NS2, NS3, NS4A, NS4B, NS5A and NS5B) are cleaved by the viral proteases (By similarity). Autoprocessing between NS2 and NS3 is mediated by the NS2 cysteine protease catalytic domain and regulated by the NS3 N-terminal domain (By similarity).</text>
</comment>
<comment type="PTM">
    <molecule>Mature core protein</molecule>
    <text evidence="7">Phosphorylated by host PKC and PKA.</text>
</comment>
<comment type="PTM">
    <molecule>Mature core protein</molecule>
    <text evidence="8">Ubiquitinated; mediated by UBE3A and leading to core protein subsequent proteasomal degradation.</text>
</comment>
<comment type="PTM">
    <molecule>Envelope glycoprotein E1</molecule>
    <text evidence="5">Highly N-glycosylated.</text>
</comment>
<comment type="PTM">
    <molecule>Envelope glycoprotein E2</molecule>
    <text evidence="5">Highly N-glycosylated.</text>
</comment>
<comment type="PTM">
    <molecule>Protease NS2</molecule>
    <text evidence="5">Palmitoylation is required for NS2/3 autoprocessing and E2 recruitment to membranes.</text>
</comment>
<comment type="PTM">
    <molecule>Non-structural protein 4B</molecule>
    <text evidence="5">Palmitoylated. This modification may play a role in its polymerization or in protein-protein interactions.</text>
</comment>
<comment type="PTM">
    <molecule>Non-structural protein 5A</molecule>
    <text evidence="3">Cleaved by host caspases which are probably activated by the viral infection.</text>
</comment>
<comment type="PTM">
    <molecule>Non-structural protein 5A</molecule>
    <text evidence="5">Ubiquitinated (By similarity). Ubiquitination, most probably at Lys-2350, mediated by host IFI27 and SKP2 leads to proteasomal degradation, restricting viral infection (By similarity).</text>
</comment>
<comment type="PTM">
    <molecule>Non-structural protein 5A</molecule>
    <text evidence="3 4 11">Phosphorylated on serines in a basal form termed p56 (By similarity). p58 is a hyperphosphorylated form of p56 (By similarity). p56 and p58 coexist in the cell in roughly equivalent amounts (By similarity). Hyperphosphorylation is dependent on the presence of NS4A (By similarity). Host CSNK1A1/CKI-alpha or RPS6KB1 kinases may be responsible for NS5A phosphorylation (By similarity). Phosphorylated NS5A is involved in viral replication (By similarity).</text>
</comment>
<comment type="PTM">
    <molecule>Non-structural protein 5A</molecule>
    <text evidence="11">Tyrosine phosphorylation is essential for the interaction with host SRC.</text>
</comment>
<comment type="PTM">
    <molecule>RNA-directed RNA polymerase</molecule>
    <text evidence="3">The N-terminus is phosphorylated by host PRK2/PKN2.</text>
</comment>
<comment type="miscellaneous">
    <text evidence="32">Viral particle assembly takes place at the surface of ER-derived membranes in close proximity to lipid droplets. NS2 associates with E1/E2 glycoproteins, NS3 and NS5A, which interacts with the viral RNA and core protein to promote genome encapsidation. The nucleocapsid buds at the ER membrane where E1/E2 glycoproteins are anchored and afterward associate with nascent lipid droplet to acquire APOE and APOC. Secretion of viral particles is probably regulated by viroporin p7.</text>
</comment>
<comment type="miscellaneous">
    <molecule>Non-structural protein 5A</molecule>
    <text evidence="32">Cell culture adaptation of the virus leads to mutations in NS5A, reducing its inhibitory effect on replication.</text>
</comment>
<comment type="miscellaneous">
    <molecule>Mature core protein</molecule>
    <text evidence="3">Exerts viral interference on hepatitis B virus when HCV and HBV coinfect the same cell, by suppressing HBV gene expression, RNA encapsidation and budding.</text>
</comment>
<comment type="similarity">
    <text evidence="32">Belongs to the hepacivirus polyprotein family.</text>
</comment>
<comment type="caution">
    <text evidence="32">The core gene probably also codes for alternative reading frame proteins (ARFPs). Many functions depicted for the core protein might belong to the ARFPs.</text>
</comment>